<organism>
    <name type="scientific">Homo sapiens</name>
    <name type="common">Human</name>
    <dbReference type="NCBI Taxonomy" id="9606"/>
    <lineage>
        <taxon>Eukaryota</taxon>
        <taxon>Metazoa</taxon>
        <taxon>Chordata</taxon>
        <taxon>Craniata</taxon>
        <taxon>Vertebrata</taxon>
        <taxon>Euteleostomi</taxon>
        <taxon>Mammalia</taxon>
        <taxon>Eutheria</taxon>
        <taxon>Euarchontoglires</taxon>
        <taxon>Primates</taxon>
        <taxon>Haplorrhini</taxon>
        <taxon>Catarrhini</taxon>
        <taxon>Hominidae</taxon>
        <taxon>Homo</taxon>
    </lineage>
</organism>
<evidence type="ECO:0000255" key="1"/>
<evidence type="ECO:0000255" key="2">
    <source>
        <dbReference type="PROSITE-ProRule" id="PRU00521"/>
    </source>
</evidence>
<evidence type="ECO:0000256" key="3">
    <source>
        <dbReference type="SAM" id="MobiDB-lite"/>
    </source>
</evidence>
<evidence type="ECO:0000269" key="4">
    <source>
    </source>
</evidence>
<evidence type="ECO:0000269" key="5">
    <source>
    </source>
</evidence>
<evidence type="ECO:0000269" key="6">
    <source>
    </source>
</evidence>
<evidence type="ECO:0000269" key="7">
    <source>
    </source>
</evidence>
<evidence type="ECO:0000269" key="8">
    <source>
    </source>
</evidence>
<evidence type="ECO:0000269" key="9">
    <source>
    </source>
</evidence>
<evidence type="ECO:0000269" key="10">
    <source>
    </source>
</evidence>
<evidence type="ECO:0000269" key="11">
    <source>
    </source>
</evidence>
<evidence type="ECO:0000269" key="12">
    <source>
    </source>
</evidence>
<evidence type="ECO:0000269" key="13">
    <source>
    </source>
</evidence>
<evidence type="ECO:0000269" key="14">
    <source>
    </source>
</evidence>
<evidence type="ECO:0000269" key="15">
    <source>
    </source>
</evidence>
<evidence type="ECO:0000269" key="16">
    <source>
    </source>
</evidence>
<evidence type="ECO:0000269" key="17">
    <source>
    </source>
</evidence>
<evidence type="ECO:0000269" key="18">
    <source>
    </source>
</evidence>
<evidence type="ECO:0000269" key="19">
    <source>
    </source>
</evidence>
<evidence type="ECO:0000269" key="20">
    <source>
    </source>
</evidence>
<evidence type="ECO:0000269" key="21">
    <source>
    </source>
</evidence>
<evidence type="ECO:0000269" key="22">
    <source>
    </source>
</evidence>
<evidence type="ECO:0000269" key="23">
    <source>
    </source>
</evidence>
<evidence type="ECO:0000269" key="24">
    <source>
    </source>
</evidence>
<evidence type="ECO:0000269" key="25">
    <source>
    </source>
</evidence>
<evidence type="ECO:0000269" key="26">
    <source>
    </source>
</evidence>
<evidence type="ECO:0000269" key="27">
    <source>
    </source>
</evidence>
<evidence type="ECO:0000269" key="28">
    <source>
    </source>
</evidence>
<evidence type="ECO:0000269" key="29">
    <source>
    </source>
</evidence>
<evidence type="ECO:0000269" key="30">
    <source>
    </source>
</evidence>
<evidence type="ECO:0000269" key="31">
    <source>
    </source>
</evidence>
<evidence type="ECO:0000269" key="32">
    <source>
    </source>
</evidence>
<evidence type="ECO:0000269" key="33">
    <source>
    </source>
</evidence>
<evidence type="ECO:0000269" key="34">
    <source>
    </source>
</evidence>
<evidence type="ECO:0000269" key="35">
    <source ref="10"/>
</evidence>
<evidence type="ECO:0000269" key="36">
    <source ref="11"/>
</evidence>
<evidence type="ECO:0000269" key="37">
    <source ref="12"/>
</evidence>
<evidence type="ECO:0000269" key="38">
    <source ref="8"/>
</evidence>
<evidence type="ECO:0000305" key="39"/>
<evidence type="ECO:0007744" key="40">
    <source>
        <dbReference type="PDB" id="2R4R"/>
    </source>
</evidence>
<evidence type="ECO:0007744" key="41">
    <source>
        <dbReference type="PDB" id="2R4S"/>
    </source>
</evidence>
<evidence type="ECO:0007744" key="42">
    <source>
        <dbReference type="PDB" id="2RH1"/>
    </source>
</evidence>
<evidence type="ECO:0007744" key="43">
    <source>
        <dbReference type="PDB" id="3D4S"/>
    </source>
</evidence>
<evidence type="ECO:0007744" key="44">
    <source>
    </source>
</evidence>
<evidence type="ECO:0007829" key="45">
    <source>
        <dbReference type="PDB" id="2R4R"/>
    </source>
</evidence>
<evidence type="ECO:0007829" key="46">
    <source>
        <dbReference type="PDB" id="2RH1"/>
    </source>
</evidence>
<evidence type="ECO:0007829" key="47">
    <source>
        <dbReference type="PDB" id="3P0G"/>
    </source>
</evidence>
<evidence type="ECO:0007829" key="48">
    <source>
        <dbReference type="PDB" id="5JQH"/>
    </source>
</evidence>
<evidence type="ECO:0007829" key="49">
    <source>
        <dbReference type="PDB" id="6PS2"/>
    </source>
</evidence>
<evidence type="ECO:0007829" key="50">
    <source>
        <dbReference type="PDB" id="6PS4"/>
    </source>
</evidence>
<evidence type="ECO:0007829" key="51">
    <source>
        <dbReference type="PDB" id="8GFV"/>
    </source>
</evidence>
<evidence type="ECO:0007829" key="52">
    <source>
        <dbReference type="PDB" id="8GG0"/>
    </source>
</evidence>
<gene>
    <name type="primary">ADRB2</name>
    <name type="synonym">ADRB2R</name>
    <name type="synonym">B2AR</name>
</gene>
<protein>
    <recommendedName>
        <fullName>Beta-2 adrenergic receptor</fullName>
    </recommendedName>
    <alternativeName>
        <fullName>Beta-2 adrenoreceptor</fullName>
        <shortName>Beta-2 adrenoceptor</shortName>
    </alternativeName>
</protein>
<dbReference type="EMBL" id="X04827">
    <property type="protein sequence ID" value="CAA28511.1"/>
    <property type="molecule type" value="mRNA"/>
</dbReference>
<dbReference type="EMBL" id="Y00106">
    <property type="protein sequence ID" value="CAA68289.1"/>
    <property type="molecule type" value="Genomic_DNA"/>
</dbReference>
<dbReference type="EMBL" id="M15169">
    <property type="protein sequence ID" value="AAA88015.1"/>
    <property type="molecule type" value="mRNA"/>
</dbReference>
<dbReference type="EMBL" id="J02960">
    <property type="protein sequence ID" value="AAA88017.1"/>
    <property type="molecule type" value="Genomic_DNA"/>
</dbReference>
<dbReference type="EMBL" id="AF022953">
    <property type="protein sequence ID" value="AAB82148.1"/>
    <property type="molecule type" value="Genomic_DNA"/>
</dbReference>
<dbReference type="EMBL" id="AF022954">
    <property type="protein sequence ID" value="AAB82149.1"/>
    <property type="molecule type" value="Genomic_DNA"/>
</dbReference>
<dbReference type="EMBL" id="AF022955">
    <property type="protein sequence ID" value="AAB82150.1"/>
    <property type="molecule type" value="Genomic_DNA"/>
</dbReference>
<dbReference type="EMBL" id="AF022956">
    <property type="protein sequence ID" value="AAB82151.1"/>
    <property type="molecule type" value="Genomic_DNA"/>
</dbReference>
<dbReference type="EMBL" id="AF169225">
    <property type="protein sequence ID" value="AAD48036.1"/>
    <property type="molecule type" value="Genomic_DNA"/>
</dbReference>
<dbReference type="EMBL" id="AF202305">
    <property type="protein sequence ID" value="AAF17569.1"/>
    <property type="molecule type" value="Genomic_DNA"/>
</dbReference>
<dbReference type="EMBL" id="AF203386">
    <property type="protein sequence ID" value="AAF20199.1"/>
    <property type="molecule type" value="Genomic_DNA"/>
</dbReference>
<dbReference type="EMBL" id="AY136741">
    <property type="protein sequence ID" value="AAN01267.1"/>
    <property type="molecule type" value="mRNA"/>
</dbReference>
<dbReference type="EMBL" id="AK313151">
    <property type="protein sequence ID" value="BAG35969.1"/>
    <property type="molecule type" value="mRNA"/>
</dbReference>
<dbReference type="EMBL" id="AK223025">
    <property type="protein sequence ID" value="BAD96745.1"/>
    <property type="status" value="ALT_INIT"/>
    <property type="molecule type" value="mRNA"/>
</dbReference>
<dbReference type="EMBL" id="DQ094845">
    <property type="protein sequence ID" value="AAY88739.1"/>
    <property type="molecule type" value="Genomic_DNA"/>
</dbReference>
<dbReference type="EMBL" id="EU332834">
    <property type="protein sequence ID" value="ABY87523.1"/>
    <property type="molecule type" value="Genomic_DNA"/>
</dbReference>
<dbReference type="EMBL" id="CH471062">
    <property type="protein sequence ID" value="EAW61798.1"/>
    <property type="molecule type" value="Genomic_DNA"/>
</dbReference>
<dbReference type="EMBL" id="BC012481">
    <property type="protein sequence ID" value="AAH12481.3"/>
    <property type="molecule type" value="mRNA"/>
</dbReference>
<dbReference type="EMBL" id="BC063486">
    <property type="protein sequence ID" value="AAH63486.2"/>
    <property type="molecule type" value="mRNA"/>
</dbReference>
<dbReference type="EMBL" id="BC073856">
    <property type="protein sequence ID" value="AAH73856.1"/>
    <property type="molecule type" value="mRNA"/>
</dbReference>
<dbReference type="CCDS" id="CCDS4292.1"/>
<dbReference type="PIR" id="A27525">
    <property type="entry name" value="QRHUB2"/>
</dbReference>
<dbReference type="RefSeq" id="NP_000015.2">
    <property type="nucleotide sequence ID" value="NM_000024.6"/>
</dbReference>
<dbReference type="PDB" id="1GQ4">
    <property type="method" value="X-ray"/>
    <property type="resolution" value="1.90 A"/>
    <property type="chains" value="A=409-413"/>
</dbReference>
<dbReference type="PDB" id="2R4R">
    <property type="method" value="X-ray"/>
    <property type="resolution" value="3.40 A"/>
    <property type="chains" value="A=1-365"/>
</dbReference>
<dbReference type="PDB" id="2R4S">
    <property type="method" value="X-ray"/>
    <property type="resolution" value="3.40 A"/>
    <property type="chains" value="A=24-365"/>
</dbReference>
<dbReference type="PDB" id="2RH1">
    <property type="method" value="X-ray"/>
    <property type="resolution" value="2.40 A"/>
    <property type="chains" value="A=1-230, A=263-365"/>
</dbReference>
<dbReference type="PDB" id="3D4S">
    <property type="method" value="X-ray"/>
    <property type="resolution" value="2.80 A"/>
    <property type="chains" value="A=1-230, A=263-348"/>
</dbReference>
<dbReference type="PDB" id="3KJ6">
    <property type="method" value="X-ray"/>
    <property type="resolution" value="3.40 A"/>
    <property type="chains" value="A=2-365"/>
</dbReference>
<dbReference type="PDB" id="3NY8">
    <property type="method" value="X-ray"/>
    <property type="resolution" value="2.84 A"/>
    <property type="chains" value="A=1-230, A=263-348"/>
</dbReference>
<dbReference type="PDB" id="3NY9">
    <property type="method" value="X-ray"/>
    <property type="resolution" value="2.84 A"/>
    <property type="chains" value="A=1-230, A=263-348"/>
</dbReference>
<dbReference type="PDB" id="3NYA">
    <property type="method" value="X-ray"/>
    <property type="resolution" value="3.16 A"/>
    <property type="chains" value="A=1-230, A=263-348"/>
</dbReference>
<dbReference type="PDB" id="3P0G">
    <property type="method" value="X-ray"/>
    <property type="resolution" value="3.50 A"/>
    <property type="chains" value="A=1-230, A=263-365"/>
</dbReference>
<dbReference type="PDB" id="3PDS">
    <property type="method" value="X-ray"/>
    <property type="resolution" value="3.50 A"/>
    <property type="chains" value="A=25-230, A=264-348"/>
</dbReference>
<dbReference type="PDB" id="3SN6">
    <property type="method" value="X-ray"/>
    <property type="resolution" value="3.20 A"/>
    <property type="chains" value="R=29-365"/>
</dbReference>
<dbReference type="PDB" id="4GBR">
    <property type="method" value="X-ray"/>
    <property type="resolution" value="3.99 A"/>
    <property type="chains" value="A=29-365"/>
</dbReference>
<dbReference type="PDB" id="4LDE">
    <property type="method" value="X-ray"/>
    <property type="resolution" value="2.79 A"/>
    <property type="chains" value="A=29-348"/>
</dbReference>
<dbReference type="PDB" id="4LDL">
    <property type="method" value="X-ray"/>
    <property type="resolution" value="3.10 A"/>
    <property type="chains" value="A=29-348"/>
</dbReference>
<dbReference type="PDB" id="4LDO">
    <property type="method" value="X-ray"/>
    <property type="resolution" value="3.20 A"/>
    <property type="chains" value="A=29-348"/>
</dbReference>
<dbReference type="PDB" id="4QKX">
    <property type="method" value="X-ray"/>
    <property type="resolution" value="3.30 A"/>
    <property type="chains" value="A=29-348"/>
</dbReference>
<dbReference type="PDB" id="5D5A">
    <property type="method" value="X-ray"/>
    <property type="resolution" value="2.48 A"/>
    <property type="chains" value="A=1-230, A=263-365"/>
</dbReference>
<dbReference type="PDB" id="5D5B">
    <property type="method" value="X-ray"/>
    <property type="resolution" value="3.80 A"/>
    <property type="chains" value="A=1-230, A=263-365"/>
</dbReference>
<dbReference type="PDB" id="5D6L">
    <property type="method" value="X-ray"/>
    <property type="resolution" value="3.20 A"/>
    <property type="chains" value="A=1-223, A=264-365"/>
</dbReference>
<dbReference type="PDB" id="5JQH">
    <property type="method" value="X-ray"/>
    <property type="resolution" value="3.20 A"/>
    <property type="chains" value="A/B=30-348"/>
</dbReference>
<dbReference type="PDB" id="5X7D">
    <property type="method" value="X-ray"/>
    <property type="resolution" value="2.70 A"/>
    <property type="chains" value="A=1-230, A=264-365"/>
</dbReference>
<dbReference type="PDB" id="6E67">
    <property type="method" value="X-ray"/>
    <property type="resolution" value="3.70 A"/>
    <property type="chains" value="A/B=1-232, A/B=268-365"/>
</dbReference>
<dbReference type="PDB" id="6KR8">
    <property type="method" value="NMR"/>
    <property type="chains" value="A=25-350"/>
</dbReference>
<dbReference type="PDB" id="6MXT">
    <property type="method" value="X-ray"/>
    <property type="resolution" value="2.96 A"/>
    <property type="chains" value="A=29-365"/>
</dbReference>
<dbReference type="PDB" id="6N48">
    <property type="method" value="X-ray"/>
    <property type="resolution" value="3.20 A"/>
    <property type="chains" value="A=29-348"/>
</dbReference>
<dbReference type="PDB" id="6NI3">
    <property type="method" value="EM"/>
    <property type="resolution" value="3.80 A"/>
    <property type="chains" value="R=29-341"/>
</dbReference>
<dbReference type="PDB" id="6OBA">
    <property type="method" value="X-ray"/>
    <property type="resolution" value="3.10 A"/>
    <property type="chains" value="A=1-230, A=264-365"/>
</dbReference>
<dbReference type="PDB" id="6PRZ">
    <property type="method" value="X-ray"/>
    <property type="resolution" value="2.80 A"/>
    <property type="chains" value="A=1-230, A=264-348"/>
</dbReference>
<dbReference type="PDB" id="6PS0">
    <property type="method" value="X-ray"/>
    <property type="resolution" value="3.40 A"/>
    <property type="chains" value="A=1-230, A=264-348"/>
</dbReference>
<dbReference type="PDB" id="6PS1">
    <property type="method" value="X-ray"/>
    <property type="resolution" value="3.20 A"/>
    <property type="chains" value="A=1-230, A=264-348"/>
</dbReference>
<dbReference type="PDB" id="6PS2">
    <property type="method" value="X-ray"/>
    <property type="resolution" value="2.40 A"/>
    <property type="chains" value="A=1-230, A=264-348"/>
</dbReference>
<dbReference type="PDB" id="6PS3">
    <property type="method" value="X-ray"/>
    <property type="resolution" value="2.50 A"/>
    <property type="chains" value="A=1-230, A=264-348"/>
</dbReference>
<dbReference type="PDB" id="6PS4">
    <property type="method" value="X-ray"/>
    <property type="resolution" value="2.60 A"/>
    <property type="chains" value="A=1-230, A=264-348"/>
</dbReference>
<dbReference type="PDB" id="6PS5">
    <property type="method" value="X-ray"/>
    <property type="resolution" value="2.90 A"/>
    <property type="chains" value="A=1-230, A=264-348"/>
</dbReference>
<dbReference type="PDB" id="6PS6">
    <property type="method" value="X-ray"/>
    <property type="resolution" value="2.70 A"/>
    <property type="chains" value="A=1-230, A=264-348"/>
</dbReference>
<dbReference type="PDB" id="7BZ2">
    <property type="method" value="EM"/>
    <property type="resolution" value="3.82 A"/>
    <property type="chains" value="R=1-348"/>
</dbReference>
<dbReference type="PDB" id="7DHI">
    <property type="method" value="EM"/>
    <property type="resolution" value="3.26 A"/>
    <property type="chains" value="R=1-348"/>
</dbReference>
<dbReference type="PDB" id="7DHR">
    <property type="method" value="EM"/>
    <property type="resolution" value="3.80 A"/>
    <property type="chains" value="R=1-348"/>
</dbReference>
<dbReference type="PDB" id="7XK9">
    <property type="method" value="X-ray"/>
    <property type="resolution" value="3.40 A"/>
    <property type="chains" value="A=29-348"/>
</dbReference>
<dbReference type="PDB" id="7XKA">
    <property type="method" value="X-ray"/>
    <property type="resolution" value="3.10 A"/>
    <property type="chains" value="A=29-348"/>
</dbReference>
<dbReference type="PDB" id="8GDZ">
    <property type="method" value="EM"/>
    <property type="resolution" value="3.50 A"/>
    <property type="chains" value="R=1-413"/>
</dbReference>
<dbReference type="PDB" id="8GE1">
    <property type="method" value="EM"/>
    <property type="resolution" value="3.40 A"/>
    <property type="chains" value="R=1-413"/>
</dbReference>
<dbReference type="PDB" id="8GE2">
    <property type="method" value="EM"/>
    <property type="resolution" value="3.30 A"/>
    <property type="chains" value="R=1-413"/>
</dbReference>
<dbReference type="PDB" id="8GE3">
    <property type="method" value="EM"/>
    <property type="resolution" value="3.30 A"/>
    <property type="chains" value="R=1-413"/>
</dbReference>
<dbReference type="PDB" id="8GE4">
    <property type="method" value="EM"/>
    <property type="resolution" value="3.30 A"/>
    <property type="chains" value="R=1-413"/>
</dbReference>
<dbReference type="PDB" id="8GE5">
    <property type="method" value="EM"/>
    <property type="resolution" value="3.20 A"/>
    <property type="chains" value="R=1-413"/>
</dbReference>
<dbReference type="PDB" id="8GE6">
    <property type="method" value="EM"/>
    <property type="resolution" value="3.40 A"/>
    <property type="chains" value="R=1-413"/>
</dbReference>
<dbReference type="PDB" id="8GE7">
    <property type="method" value="EM"/>
    <property type="resolution" value="3.40 A"/>
    <property type="chains" value="R=1-413"/>
</dbReference>
<dbReference type="PDB" id="8GE8">
    <property type="method" value="EM"/>
    <property type="resolution" value="3.40 A"/>
    <property type="chains" value="R=1-413"/>
</dbReference>
<dbReference type="PDB" id="8GE9">
    <property type="method" value="EM"/>
    <property type="resolution" value="3.50 A"/>
    <property type="chains" value="R=1-413"/>
</dbReference>
<dbReference type="PDB" id="8GEA">
    <property type="method" value="EM"/>
    <property type="resolution" value="3.50 A"/>
    <property type="chains" value="R=1-413"/>
</dbReference>
<dbReference type="PDB" id="8GEB">
    <property type="method" value="EM"/>
    <property type="resolution" value="3.60 A"/>
    <property type="chains" value="R=1-413"/>
</dbReference>
<dbReference type="PDB" id="8GEC">
    <property type="method" value="EM"/>
    <property type="resolution" value="3.50 A"/>
    <property type="chains" value="R=1-413"/>
</dbReference>
<dbReference type="PDB" id="8GED">
    <property type="method" value="EM"/>
    <property type="resolution" value="3.50 A"/>
    <property type="chains" value="R=1-413"/>
</dbReference>
<dbReference type="PDB" id="8GEE">
    <property type="method" value="EM"/>
    <property type="resolution" value="3.70 A"/>
    <property type="chains" value="R=1-413"/>
</dbReference>
<dbReference type="PDB" id="8GEF">
    <property type="method" value="EM"/>
    <property type="resolution" value="3.80 A"/>
    <property type="chains" value="R=1-413"/>
</dbReference>
<dbReference type="PDB" id="8GEG">
    <property type="method" value="EM"/>
    <property type="resolution" value="3.80 A"/>
    <property type="chains" value="R=1-413"/>
</dbReference>
<dbReference type="PDB" id="8GEH">
    <property type="method" value="EM"/>
    <property type="resolution" value="4.00 A"/>
    <property type="chains" value="R=1-413"/>
</dbReference>
<dbReference type="PDB" id="8GEI">
    <property type="method" value="EM"/>
    <property type="resolution" value="4.10 A"/>
    <property type="chains" value="R=1-413"/>
</dbReference>
<dbReference type="PDB" id="8GEJ">
    <property type="method" value="EM"/>
    <property type="resolution" value="4.20 A"/>
    <property type="chains" value="R=1-413"/>
</dbReference>
<dbReference type="PDB" id="8GFV">
    <property type="method" value="EM"/>
    <property type="resolution" value="3.10 A"/>
    <property type="chains" value="R=1-413"/>
</dbReference>
<dbReference type="PDB" id="8GFW">
    <property type="method" value="EM"/>
    <property type="resolution" value="3.00 A"/>
    <property type="chains" value="R=1-413"/>
</dbReference>
<dbReference type="PDB" id="8GFX">
    <property type="method" value="EM"/>
    <property type="resolution" value="3.00 A"/>
    <property type="chains" value="R=1-413"/>
</dbReference>
<dbReference type="PDB" id="8GFY">
    <property type="method" value="EM"/>
    <property type="resolution" value="3.00 A"/>
    <property type="chains" value="R=1-413"/>
</dbReference>
<dbReference type="PDB" id="8GFZ">
    <property type="method" value="EM"/>
    <property type="resolution" value="3.00 A"/>
    <property type="chains" value="R=1-413"/>
</dbReference>
<dbReference type="PDB" id="8GG0">
    <property type="method" value="EM"/>
    <property type="resolution" value="2.90 A"/>
    <property type="chains" value="R=1-413"/>
</dbReference>
<dbReference type="PDB" id="8GG1">
    <property type="method" value="EM"/>
    <property type="resolution" value="3.00 A"/>
    <property type="chains" value="R=1-413"/>
</dbReference>
<dbReference type="PDB" id="8GG2">
    <property type="method" value="EM"/>
    <property type="resolution" value="3.00 A"/>
    <property type="chains" value="R=1-413"/>
</dbReference>
<dbReference type="PDB" id="8GG3">
    <property type="method" value="EM"/>
    <property type="resolution" value="3.10 A"/>
    <property type="chains" value="R=1-413"/>
</dbReference>
<dbReference type="PDB" id="8GG4">
    <property type="method" value="EM"/>
    <property type="resolution" value="3.20 A"/>
    <property type="chains" value="R=1-413"/>
</dbReference>
<dbReference type="PDB" id="8GG5">
    <property type="method" value="EM"/>
    <property type="resolution" value="3.20 A"/>
    <property type="chains" value="R=1-413"/>
</dbReference>
<dbReference type="PDB" id="8GG6">
    <property type="method" value="EM"/>
    <property type="resolution" value="3.30 A"/>
    <property type="chains" value="R=1-413"/>
</dbReference>
<dbReference type="PDB" id="8GG7">
    <property type="method" value="EM"/>
    <property type="resolution" value="3.30 A"/>
    <property type="chains" value="R=1-413"/>
</dbReference>
<dbReference type="PDB" id="8GG8">
    <property type="method" value="EM"/>
    <property type="resolution" value="3.30 A"/>
    <property type="chains" value="R=1-413"/>
</dbReference>
<dbReference type="PDB" id="8GG9">
    <property type="method" value="EM"/>
    <property type="resolution" value="3.40 A"/>
    <property type="chains" value="R=1-413"/>
</dbReference>
<dbReference type="PDB" id="8GGA">
    <property type="method" value="EM"/>
    <property type="resolution" value="3.50 A"/>
    <property type="chains" value="R=1-413"/>
</dbReference>
<dbReference type="PDB" id="8GGB">
    <property type="method" value="EM"/>
    <property type="resolution" value="3.50 A"/>
    <property type="chains" value="R=1-413"/>
</dbReference>
<dbReference type="PDB" id="8GGC">
    <property type="method" value="EM"/>
    <property type="resolution" value="3.40 A"/>
    <property type="chains" value="R=1-413"/>
</dbReference>
<dbReference type="PDB" id="8GGE">
    <property type="method" value="EM"/>
    <property type="resolution" value="3.50 A"/>
    <property type="chains" value="R=1-413"/>
</dbReference>
<dbReference type="PDB" id="8GGF">
    <property type="method" value="EM"/>
    <property type="resolution" value="3.60 A"/>
    <property type="chains" value="R=1-413"/>
</dbReference>
<dbReference type="PDB" id="8GGI">
    <property type="method" value="EM"/>
    <property type="resolution" value="3.50 A"/>
    <property type="chains" value="R=1-413"/>
</dbReference>
<dbReference type="PDB" id="8GGJ">
    <property type="method" value="EM"/>
    <property type="resolution" value="3.50 A"/>
    <property type="chains" value="R=1-413"/>
</dbReference>
<dbReference type="PDB" id="8GGK">
    <property type="method" value="EM"/>
    <property type="resolution" value="3.30 A"/>
    <property type="chains" value="R=1-413"/>
</dbReference>
<dbReference type="PDB" id="8GGL">
    <property type="method" value="EM"/>
    <property type="resolution" value="3.20 A"/>
    <property type="chains" value="R=1-413"/>
</dbReference>
<dbReference type="PDB" id="8GGM">
    <property type="method" value="EM"/>
    <property type="resolution" value="3.20 A"/>
    <property type="chains" value="R=1-413"/>
</dbReference>
<dbReference type="PDB" id="8GGN">
    <property type="method" value="EM"/>
    <property type="resolution" value="3.30 A"/>
    <property type="chains" value="R=1-413"/>
</dbReference>
<dbReference type="PDB" id="8GGO">
    <property type="method" value="EM"/>
    <property type="resolution" value="3.20 A"/>
    <property type="chains" value="R=1-413"/>
</dbReference>
<dbReference type="PDB" id="8GGP">
    <property type="method" value="EM"/>
    <property type="resolution" value="3.20 A"/>
    <property type="chains" value="R=1-413"/>
</dbReference>
<dbReference type="PDB" id="8GGQ">
    <property type="method" value="EM"/>
    <property type="resolution" value="3.40 A"/>
    <property type="chains" value="R=1-413"/>
</dbReference>
<dbReference type="PDB" id="8GGR">
    <property type="method" value="EM"/>
    <property type="resolution" value="3.40 A"/>
    <property type="chains" value="R=1-413"/>
</dbReference>
<dbReference type="PDB" id="8GGS">
    <property type="method" value="EM"/>
    <property type="resolution" value="3.50 A"/>
    <property type="chains" value="R=1-413"/>
</dbReference>
<dbReference type="PDB" id="8GGT">
    <property type="method" value="EM"/>
    <property type="resolution" value="3.50 A"/>
    <property type="chains" value="R=1-413"/>
</dbReference>
<dbReference type="PDB" id="8GGU">
    <property type="method" value="EM"/>
    <property type="resolution" value="3.40 A"/>
    <property type="chains" value="R=1-413"/>
</dbReference>
<dbReference type="PDB" id="8GGV">
    <property type="method" value="EM"/>
    <property type="resolution" value="3.50 A"/>
    <property type="chains" value="R=1-413"/>
</dbReference>
<dbReference type="PDB" id="8GGW">
    <property type="method" value="EM"/>
    <property type="resolution" value="3.60 A"/>
    <property type="chains" value="R=1-413"/>
</dbReference>
<dbReference type="PDB" id="8GGX">
    <property type="method" value="EM"/>
    <property type="resolution" value="3.60 A"/>
    <property type="chains" value="R=1-413"/>
</dbReference>
<dbReference type="PDB" id="8GGY">
    <property type="method" value="EM"/>
    <property type="resolution" value="3.90 A"/>
    <property type="chains" value="R=1-413"/>
</dbReference>
<dbReference type="PDB" id="8GGZ">
    <property type="method" value="EM"/>
    <property type="resolution" value="3.90 A"/>
    <property type="chains" value="R=1-413"/>
</dbReference>
<dbReference type="PDB" id="8GH0">
    <property type="method" value="EM"/>
    <property type="resolution" value="4.00 A"/>
    <property type="chains" value="R=1-413"/>
</dbReference>
<dbReference type="PDB" id="8GH1">
    <property type="method" value="EM"/>
    <property type="resolution" value="4.10 A"/>
    <property type="chains" value="R=1-413"/>
</dbReference>
<dbReference type="PDB" id="8JJ8">
    <property type="method" value="EM"/>
    <property type="resolution" value="3.20 A"/>
    <property type="chains" value="F=29-230, F=263-340"/>
</dbReference>
<dbReference type="PDB" id="8JJL">
    <property type="method" value="EM"/>
    <property type="resolution" value="3.20 A"/>
    <property type="chains" value="A=29-230, A=263-340"/>
</dbReference>
<dbReference type="PDB" id="8JJO">
    <property type="method" value="EM"/>
    <property type="resolution" value="3.40 A"/>
    <property type="chains" value="F=29-340"/>
</dbReference>
<dbReference type="PDB" id="8UHB">
    <property type="method" value="EM"/>
    <property type="resolution" value="3.35 A"/>
    <property type="chains" value="A=1-30"/>
</dbReference>
<dbReference type="PDB" id="8UNL">
    <property type="method" value="EM"/>
    <property type="resolution" value="3.30 A"/>
    <property type="chains" value="R=1-413"/>
</dbReference>
<dbReference type="PDB" id="8UNM">
    <property type="method" value="EM"/>
    <property type="resolution" value="3.40 A"/>
    <property type="chains" value="R=1-413"/>
</dbReference>
<dbReference type="PDB" id="8UNN">
    <property type="method" value="EM"/>
    <property type="resolution" value="3.40 A"/>
    <property type="chains" value="R=1-413"/>
</dbReference>
<dbReference type="PDB" id="8UNO">
    <property type="method" value="EM"/>
    <property type="resolution" value="3.30 A"/>
    <property type="chains" value="R=1-413"/>
</dbReference>
<dbReference type="PDB" id="8UNP">
    <property type="method" value="EM"/>
    <property type="resolution" value="3.30 A"/>
    <property type="chains" value="R=1-413"/>
</dbReference>
<dbReference type="PDB" id="8UNQ">
    <property type="method" value="EM"/>
    <property type="resolution" value="3.30 A"/>
    <property type="chains" value="R=1-413"/>
</dbReference>
<dbReference type="PDB" id="8UNR">
    <property type="method" value="EM"/>
    <property type="resolution" value="3.40 A"/>
    <property type="chains" value="R=1-413"/>
</dbReference>
<dbReference type="PDB" id="8UNS">
    <property type="method" value="EM"/>
    <property type="resolution" value="3.40 A"/>
    <property type="chains" value="R=1-413"/>
</dbReference>
<dbReference type="PDB" id="8UNT">
    <property type="method" value="EM"/>
    <property type="resolution" value="3.40 A"/>
    <property type="chains" value="R=1-413"/>
</dbReference>
<dbReference type="PDB" id="8UNU">
    <property type="method" value="EM"/>
    <property type="resolution" value="3.50 A"/>
    <property type="chains" value="R=1-413"/>
</dbReference>
<dbReference type="PDB" id="8UNV">
    <property type="method" value="EM"/>
    <property type="resolution" value="3.30 A"/>
    <property type="chains" value="R=1-413"/>
</dbReference>
<dbReference type="PDB" id="8UNW">
    <property type="method" value="EM"/>
    <property type="resolution" value="3.40 A"/>
    <property type="chains" value="R=1-413"/>
</dbReference>
<dbReference type="PDB" id="8UNX">
    <property type="method" value="EM"/>
    <property type="resolution" value="3.60 A"/>
    <property type="chains" value="R=1-413"/>
</dbReference>
<dbReference type="PDB" id="8UNY">
    <property type="method" value="EM"/>
    <property type="resolution" value="3.60 A"/>
    <property type="chains" value="R=1-413"/>
</dbReference>
<dbReference type="PDB" id="8UNZ">
    <property type="method" value="EM"/>
    <property type="resolution" value="3.80 A"/>
    <property type="chains" value="R=1-413"/>
</dbReference>
<dbReference type="PDB" id="8UO0">
    <property type="method" value="EM"/>
    <property type="resolution" value="3.50 A"/>
    <property type="chains" value="R=1-413"/>
</dbReference>
<dbReference type="PDB" id="8UO1">
    <property type="method" value="EM"/>
    <property type="resolution" value="3.60 A"/>
    <property type="chains" value="R=1-413"/>
</dbReference>
<dbReference type="PDB" id="8UO2">
    <property type="method" value="EM"/>
    <property type="resolution" value="3.60 A"/>
    <property type="chains" value="R=1-413"/>
</dbReference>
<dbReference type="PDB" id="8UO3">
    <property type="method" value="EM"/>
    <property type="resolution" value="3.50 A"/>
    <property type="chains" value="R=1-413"/>
</dbReference>
<dbReference type="PDB" id="8UO4">
    <property type="method" value="EM"/>
    <property type="resolution" value="4.00 A"/>
    <property type="chains" value="R=1-413"/>
</dbReference>
<dbReference type="PDB" id="8W1V">
    <property type="method" value="X-ray"/>
    <property type="resolution" value="3.00 A"/>
    <property type="chains" value="A/B=1-365"/>
</dbReference>
<dbReference type="PDB" id="8ZBE">
    <property type="method" value="EM"/>
    <property type="resolution" value="3.24 A"/>
    <property type="chains" value="A=1-24, A=385-400"/>
</dbReference>
<dbReference type="PDB" id="8ZCJ">
    <property type="method" value="EM"/>
    <property type="resolution" value="3.09 A"/>
    <property type="chains" value="G=1-24, G=385-400"/>
</dbReference>
<dbReference type="PDB" id="9CHU">
    <property type="method" value="EM"/>
    <property type="resolution" value="3.49 A"/>
    <property type="chains" value="A=29-230, A=263-336"/>
</dbReference>
<dbReference type="PDB" id="9CHV">
    <property type="method" value="EM"/>
    <property type="resolution" value="3.95 A"/>
    <property type="chains" value="A=29-230, A=263-354"/>
</dbReference>
<dbReference type="PDB" id="9CHX">
    <property type="method" value="EM"/>
    <property type="resolution" value="3.50 A"/>
    <property type="chains" value="A=29-230, A=263-354"/>
</dbReference>
<dbReference type="PDBsum" id="1GQ4"/>
<dbReference type="PDBsum" id="2R4R"/>
<dbReference type="PDBsum" id="2R4S"/>
<dbReference type="PDBsum" id="2RH1"/>
<dbReference type="PDBsum" id="3D4S"/>
<dbReference type="PDBsum" id="3KJ6"/>
<dbReference type="PDBsum" id="3NY8"/>
<dbReference type="PDBsum" id="3NY9"/>
<dbReference type="PDBsum" id="3NYA"/>
<dbReference type="PDBsum" id="3P0G"/>
<dbReference type="PDBsum" id="3PDS"/>
<dbReference type="PDBsum" id="3SN6"/>
<dbReference type="PDBsum" id="4GBR"/>
<dbReference type="PDBsum" id="4LDE"/>
<dbReference type="PDBsum" id="4LDL"/>
<dbReference type="PDBsum" id="4LDO"/>
<dbReference type="PDBsum" id="4QKX"/>
<dbReference type="PDBsum" id="5D5A"/>
<dbReference type="PDBsum" id="5D5B"/>
<dbReference type="PDBsum" id="5D6L"/>
<dbReference type="PDBsum" id="5JQH"/>
<dbReference type="PDBsum" id="5X7D"/>
<dbReference type="PDBsum" id="6E67"/>
<dbReference type="PDBsum" id="6KR8"/>
<dbReference type="PDBsum" id="6MXT"/>
<dbReference type="PDBsum" id="6N48"/>
<dbReference type="PDBsum" id="6NI3"/>
<dbReference type="PDBsum" id="6OBA"/>
<dbReference type="PDBsum" id="6PRZ"/>
<dbReference type="PDBsum" id="6PS0"/>
<dbReference type="PDBsum" id="6PS1"/>
<dbReference type="PDBsum" id="6PS2"/>
<dbReference type="PDBsum" id="6PS3"/>
<dbReference type="PDBsum" id="6PS4"/>
<dbReference type="PDBsum" id="6PS5"/>
<dbReference type="PDBsum" id="6PS6"/>
<dbReference type="PDBsum" id="7BZ2"/>
<dbReference type="PDBsum" id="7DHI"/>
<dbReference type="PDBsum" id="7DHR"/>
<dbReference type="PDBsum" id="7XK9"/>
<dbReference type="PDBsum" id="7XKA"/>
<dbReference type="PDBsum" id="8GDZ"/>
<dbReference type="PDBsum" id="8GE1"/>
<dbReference type="PDBsum" id="8GE2"/>
<dbReference type="PDBsum" id="8GE3"/>
<dbReference type="PDBsum" id="8GE4"/>
<dbReference type="PDBsum" id="8GE5"/>
<dbReference type="PDBsum" id="8GE6"/>
<dbReference type="PDBsum" id="8GE7"/>
<dbReference type="PDBsum" id="8GE8"/>
<dbReference type="PDBsum" id="8GE9"/>
<dbReference type="PDBsum" id="8GEA"/>
<dbReference type="PDBsum" id="8GEB"/>
<dbReference type="PDBsum" id="8GEC"/>
<dbReference type="PDBsum" id="8GED"/>
<dbReference type="PDBsum" id="8GEE"/>
<dbReference type="PDBsum" id="8GEF"/>
<dbReference type="PDBsum" id="8GEG"/>
<dbReference type="PDBsum" id="8GEH"/>
<dbReference type="PDBsum" id="8GEI"/>
<dbReference type="PDBsum" id="8GEJ"/>
<dbReference type="PDBsum" id="8GFV"/>
<dbReference type="PDBsum" id="8GFW"/>
<dbReference type="PDBsum" id="8GFX"/>
<dbReference type="PDBsum" id="8GFY"/>
<dbReference type="PDBsum" id="8GFZ"/>
<dbReference type="PDBsum" id="8GG0"/>
<dbReference type="PDBsum" id="8GG1"/>
<dbReference type="PDBsum" id="8GG2"/>
<dbReference type="PDBsum" id="8GG3"/>
<dbReference type="PDBsum" id="8GG4"/>
<dbReference type="PDBsum" id="8GG5"/>
<dbReference type="PDBsum" id="8GG6"/>
<dbReference type="PDBsum" id="8GG7"/>
<dbReference type="PDBsum" id="8GG8"/>
<dbReference type="PDBsum" id="8GG9"/>
<dbReference type="PDBsum" id="8GGA"/>
<dbReference type="PDBsum" id="8GGB"/>
<dbReference type="PDBsum" id="8GGC"/>
<dbReference type="PDBsum" id="8GGE"/>
<dbReference type="PDBsum" id="8GGF"/>
<dbReference type="PDBsum" id="8GGI"/>
<dbReference type="PDBsum" id="8GGJ"/>
<dbReference type="PDBsum" id="8GGK"/>
<dbReference type="PDBsum" id="8GGL"/>
<dbReference type="PDBsum" id="8GGM"/>
<dbReference type="PDBsum" id="8GGN"/>
<dbReference type="PDBsum" id="8GGO"/>
<dbReference type="PDBsum" id="8GGP"/>
<dbReference type="PDBsum" id="8GGQ"/>
<dbReference type="PDBsum" id="8GGR"/>
<dbReference type="PDBsum" id="8GGS"/>
<dbReference type="PDBsum" id="8GGT"/>
<dbReference type="PDBsum" id="8GGU"/>
<dbReference type="PDBsum" id="8GGV"/>
<dbReference type="PDBsum" id="8GGW"/>
<dbReference type="PDBsum" id="8GGX"/>
<dbReference type="PDBsum" id="8GGY"/>
<dbReference type="PDBsum" id="8GGZ"/>
<dbReference type="PDBsum" id="8GH0"/>
<dbReference type="PDBsum" id="8GH1"/>
<dbReference type="PDBsum" id="8JJ8"/>
<dbReference type="PDBsum" id="8JJL"/>
<dbReference type="PDBsum" id="8JJO"/>
<dbReference type="PDBsum" id="8UHB"/>
<dbReference type="PDBsum" id="8UNL"/>
<dbReference type="PDBsum" id="8UNM"/>
<dbReference type="PDBsum" id="8UNN"/>
<dbReference type="PDBsum" id="8UNO"/>
<dbReference type="PDBsum" id="8UNP"/>
<dbReference type="PDBsum" id="8UNQ"/>
<dbReference type="PDBsum" id="8UNR"/>
<dbReference type="PDBsum" id="8UNS"/>
<dbReference type="PDBsum" id="8UNT"/>
<dbReference type="PDBsum" id="8UNU"/>
<dbReference type="PDBsum" id="8UNV"/>
<dbReference type="PDBsum" id="8UNW"/>
<dbReference type="PDBsum" id="8UNX"/>
<dbReference type="PDBsum" id="8UNY"/>
<dbReference type="PDBsum" id="8UNZ"/>
<dbReference type="PDBsum" id="8UO0"/>
<dbReference type="PDBsum" id="8UO1"/>
<dbReference type="PDBsum" id="8UO2"/>
<dbReference type="PDBsum" id="8UO3"/>
<dbReference type="PDBsum" id="8UO4"/>
<dbReference type="PDBsum" id="8W1V"/>
<dbReference type="PDBsum" id="8ZBE"/>
<dbReference type="PDBsum" id="8ZCJ"/>
<dbReference type="PDBsum" id="9CHU"/>
<dbReference type="PDBsum" id="9CHV"/>
<dbReference type="PDBsum" id="9CHX"/>
<dbReference type="EMDB" id="EMD-29951"/>
<dbReference type="EMDB" id="EMD-29952"/>
<dbReference type="EMDB" id="EMD-29953"/>
<dbReference type="EMDB" id="EMD-29954"/>
<dbReference type="EMDB" id="EMD-29955"/>
<dbReference type="EMDB" id="EMD-29956"/>
<dbReference type="EMDB" id="EMD-29958"/>
<dbReference type="EMDB" id="EMD-29959"/>
<dbReference type="EMDB" id="EMD-29960"/>
<dbReference type="EMDB" id="EMD-29961"/>
<dbReference type="EMDB" id="EMD-29962"/>
<dbReference type="EMDB" id="EMD-29964"/>
<dbReference type="EMDB" id="EMD-29965"/>
<dbReference type="EMDB" id="EMD-29966"/>
<dbReference type="EMDB" id="EMD-29967"/>
<dbReference type="EMDB" id="EMD-29968"/>
<dbReference type="EMDB" id="EMD-29969"/>
<dbReference type="EMDB" id="EMD-29970"/>
<dbReference type="EMDB" id="EMD-29971"/>
<dbReference type="EMDB" id="EMD-29972"/>
<dbReference type="EMDB" id="EMD-29985"/>
<dbReference type="EMDB" id="EMD-29986"/>
<dbReference type="EMDB" id="EMD-29987"/>
<dbReference type="EMDB" id="EMD-29988"/>
<dbReference type="EMDB" id="EMD-29989"/>
<dbReference type="EMDB" id="EMD-29990"/>
<dbReference type="EMDB" id="EMD-29991"/>
<dbReference type="EMDB" id="EMD-29992"/>
<dbReference type="EMDB" id="EMD-29993"/>
<dbReference type="EMDB" id="EMD-29994"/>
<dbReference type="EMDB" id="EMD-29995"/>
<dbReference type="EMDB" id="EMD-29996"/>
<dbReference type="EMDB" id="EMD-29997"/>
<dbReference type="EMDB" id="EMD-29998"/>
<dbReference type="EMDB" id="EMD-29999"/>
<dbReference type="EMDB" id="EMD-30249"/>
<dbReference type="EMDB" id="EMD-30681"/>
<dbReference type="EMDB" id="EMD-30682"/>
<dbReference type="EMDB" id="EMD-36342"/>
<dbReference type="EMDB" id="EMD-36360"/>
<dbReference type="EMDB" id="EMD-36361"/>
<dbReference type="EMDB" id="EMD-40000"/>
<dbReference type="EMDB" id="EMD-40001"/>
<dbReference type="EMDB" id="EMD-40002"/>
<dbReference type="EMDB" id="EMD-40004"/>
<dbReference type="EMDB" id="EMD-40005"/>
<dbReference type="EMDB" id="EMD-40009"/>
<dbReference type="EMDB" id="EMD-40010"/>
<dbReference type="EMDB" id="EMD-40011"/>
<dbReference type="EMDB" id="EMD-40012"/>
<dbReference type="EMDB" id="EMD-40013"/>
<dbReference type="EMDB" id="EMD-40014"/>
<dbReference type="EMDB" id="EMD-40015"/>
<dbReference type="EMDB" id="EMD-40016"/>
<dbReference type="EMDB" id="EMD-40017"/>
<dbReference type="EMDB" id="EMD-40018"/>
<dbReference type="EMDB" id="EMD-40019"/>
<dbReference type="EMDB" id="EMD-40020"/>
<dbReference type="EMDB" id="EMD-40021"/>
<dbReference type="EMDB" id="EMD-40022"/>
<dbReference type="EMDB" id="EMD-40023"/>
<dbReference type="EMDB" id="EMD-40024"/>
<dbReference type="EMDB" id="EMD-40025"/>
<dbReference type="EMDB" id="EMD-40026"/>
<dbReference type="EMDB" id="EMD-40027"/>
<dbReference type="EMDB" id="EMD-40028"/>
<dbReference type="EMDB" id="EMD-40096"/>
<dbReference type="EMDB" id="EMD-40097"/>
<dbReference type="EMDB" id="EMD-40098"/>
<dbReference type="EMDB" id="EMD-40099"/>
<dbReference type="EMDB" id="EMD-40100"/>
<dbReference type="EMDB" id="EMD-40101"/>
<dbReference type="EMDB" id="EMD-40102"/>
<dbReference type="EMDB" id="EMD-40103"/>
<dbReference type="EMDB" id="EMD-40104"/>
<dbReference type="EMDB" id="EMD-40105"/>
<dbReference type="EMDB" id="EMD-40106"/>
<dbReference type="EMDB" id="EMD-40107"/>
<dbReference type="EMDB" id="EMD-40108"/>
<dbReference type="EMDB" id="EMD-40109"/>
<dbReference type="EMDB" id="EMD-40110"/>
<dbReference type="EMDB" id="EMD-40111"/>
<dbReference type="EMDB" id="EMD-40112"/>
<dbReference type="EMDB" id="EMD-40113"/>
<dbReference type="EMDB" id="EMD-40114"/>
<dbReference type="EMDB" id="EMD-40115"/>
<dbReference type="EMDB" id="EMD-40116"/>
<dbReference type="EMDB" id="EMD-40117"/>
<dbReference type="EMDB" id="EMD-40118"/>
<dbReference type="EMDB" id="EMD-40119"/>
<dbReference type="EMDB" id="EMD-40121"/>
<dbReference type="EMDB" id="EMD-40122"/>
<dbReference type="EMDB" id="EMD-40123"/>
<dbReference type="EMDB" id="EMD-40124"/>
<dbReference type="EMDB" id="EMD-40125"/>
<dbReference type="EMDB" id="EMD-40126"/>
<dbReference type="EMDB" id="EMD-40127"/>
<dbReference type="EMDB" id="EMD-40128"/>
<dbReference type="EMDB" id="EMD-40129"/>
<dbReference type="EMDB" id="EMD-40130"/>
<dbReference type="EMDB" id="EMD-40131"/>
<dbReference type="EMDB" id="EMD-40132"/>
<dbReference type="EMDB" id="EMD-40133"/>
<dbReference type="EMDB" id="EMD-40134"/>
<dbReference type="EMDB" id="EMD-40135"/>
<dbReference type="EMDB" id="EMD-40136"/>
<dbReference type="EMDB" id="EMD-40137"/>
<dbReference type="EMDB" id="EMD-40138"/>
<dbReference type="EMDB" id="EMD-40139"/>
<dbReference type="EMDB" id="EMD-40140"/>
<dbReference type="EMDB" id="EMD-40141"/>
<dbReference type="EMDB" id="EMD-40142"/>
<dbReference type="EMDB" id="EMD-40143"/>
<dbReference type="EMDB" id="EMD-40144"/>
<dbReference type="EMDB" id="EMD-40145"/>
<dbReference type="EMDB" id="EMD-40146"/>
<dbReference type="EMDB" id="EMD-40147"/>
<dbReference type="EMDB" id="EMD-40148"/>
<dbReference type="EMDB" id="EMD-40149"/>
<dbReference type="EMDB" id="EMD-40150"/>
<dbReference type="EMDB" id="EMD-40152"/>
<dbReference type="EMDB" id="EMD-40153"/>
<dbReference type="EMDB" id="EMD-40154"/>
<dbReference type="EMDB" id="EMD-40155"/>
<dbReference type="EMDB" id="EMD-40157"/>
<dbReference type="EMDB" id="EMD-40158"/>
<dbReference type="EMDB" id="EMD-40159"/>
<dbReference type="EMDB" id="EMD-40160"/>
<dbReference type="EMDB" id="EMD-40161"/>
<dbReference type="EMDB" id="EMD-40163"/>
<dbReference type="EMDB" id="EMD-40164"/>
<dbReference type="EMDB" id="EMD-40165"/>
<dbReference type="EMDB" id="EMD-40166"/>
<dbReference type="EMDB" id="EMD-40167"/>
<dbReference type="EMDB" id="EMD-40170"/>
<dbReference type="EMDB" id="EMD-40171"/>
<dbReference type="EMDB" id="EMD-40172"/>
<dbReference type="EMDB" id="EMD-40173"/>
<dbReference type="EMDB" id="EMD-40174"/>
<dbReference type="EMDB" id="EMD-40175"/>
<dbReference type="EMDB" id="EMD-40176"/>
<dbReference type="EMDB" id="EMD-42408"/>
<dbReference type="EMDB" id="EMD-42409"/>
<dbReference type="EMDB" id="EMD-42410"/>
<dbReference type="EMDB" id="EMD-42411"/>
<dbReference type="EMDB" id="EMD-42412"/>
<dbReference type="EMDB" id="EMD-42413"/>
<dbReference type="EMDB" id="EMD-42414"/>
<dbReference type="EMDB" id="EMD-42415"/>
<dbReference type="EMDB" id="EMD-42416"/>
<dbReference type="EMDB" id="EMD-42417"/>
<dbReference type="EMDB" id="EMD-42418"/>
<dbReference type="EMDB" id="EMD-42419"/>
<dbReference type="EMDB" id="EMD-42420"/>
<dbReference type="EMDB" id="EMD-42421"/>
<dbReference type="EMDB" id="EMD-42422"/>
<dbReference type="EMDB" id="EMD-42423"/>
<dbReference type="EMDB" id="EMD-42424"/>
<dbReference type="EMDB" id="EMD-42425"/>
<dbReference type="EMDB" id="EMD-42426"/>
<dbReference type="EMDB" id="EMD-42427"/>
<dbReference type="EMDB" id="EMD-45602"/>
<dbReference type="EMDB" id="EMD-45603"/>
<dbReference type="EMDB" id="EMD-45604"/>
<dbReference type="EMDB" id="EMD-9376"/>
<dbReference type="SMR" id="P07550"/>
<dbReference type="BioGRID" id="106663">
    <property type="interactions" value="326"/>
</dbReference>
<dbReference type="CORUM" id="P07550"/>
<dbReference type="DIP" id="DIP-33948N"/>
<dbReference type="ELM" id="P07550"/>
<dbReference type="FunCoup" id="P07550">
    <property type="interactions" value="1168"/>
</dbReference>
<dbReference type="IntAct" id="P07550">
    <property type="interactions" value="107"/>
</dbReference>
<dbReference type="MINT" id="P07550"/>
<dbReference type="STRING" id="9606.ENSP00000305372"/>
<dbReference type="BindingDB" id="P07550"/>
<dbReference type="ChEMBL" id="CHEMBL210"/>
<dbReference type="DrugBank" id="DB07543">
    <property type="generic name" value="(S)-carazolol"/>
</dbReference>
<dbReference type="DrugBank" id="DB12100">
    <property type="generic name" value="Abediterol"/>
</dbReference>
<dbReference type="DrugBank" id="DB01193">
    <property type="generic name" value="Acebutolol"/>
</dbReference>
<dbReference type="DrugBank" id="DB01001">
    <property type="generic name" value="Albuterol"/>
</dbReference>
<dbReference type="DrugBank" id="DB00866">
    <property type="generic name" value="Alprenolol"/>
</dbReference>
<dbReference type="DrugBank" id="DB01118">
    <property type="generic name" value="Amiodarone"/>
</dbReference>
<dbReference type="DrugBank" id="DB00182">
    <property type="generic name" value="Amphetamine"/>
</dbReference>
<dbReference type="DrugBank" id="DB18759">
    <property type="generic name" value="APD-209"/>
</dbReference>
<dbReference type="DrugBank" id="DB01102">
    <property type="generic name" value="Arbutamine"/>
</dbReference>
<dbReference type="DrugBank" id="DB01274">
    <property type="generic name" value="Arformoterol"/>
</dbReference>
<dbReference type="DrugBank" id="DB01238">
    <property type="generic name" value="Aripiprazole"/>
</dbReference>
<dbReference type="DrugBank" id="DB09204">
    <property type="generic name" value="Arotinolol"/>
</dbReference>
<dbReference type="DrugBank" id="DB06216">
    <property type="generic name" value="Asenapine"/>
</dbReference>
<dbReference type="DrugBank" id="DB00335">
    <property type="generic name" value="Atenolol"/>
</dbReference>
<dbReference type="DrugBank" id="DB01408">
    <property type="generic name" value="Bambuterol"/>
</dbReference>
<dbReference type="DrugBank" id="DB12526">
    <property type="generic name" value="Batefenterol"/>
</dbReference>
<dbReference type="DrugBank" id="DB05590">
    <property type="generic name" value="Bedoradrine"/>
</dbReference>
<dbReference type="DrugBank" id="DB09013">
    <property type="generic name" value="Befunolol"/>
</dbReference>
<dbReference type="DrugBank" id="DB00195">
    <property type="generic name" value="Betaxolol"/>
</dbReference>
<dbReference type="DrugBank" id="DB00217">
    <property type="generic name" value="Bethanidine"/>
</dbReference>
<dbReference type="DrugBank" id="DB01295">
    <property type="generic name" value="Bevantolol"/>
</dbReference>
<dbReference type="DrugBank" id="DB00612">
    <property type="generic name" value="Bisoprolol"/>
</dbReference>
<dbReference type="DrugBank" id="DB00901">
    <property type="generic name" value="Bitolterol"/>
</dbReference>
<dbReference type="DrugBank" id="DB08807">
    <property type="generic name" value="Bopindolol"/>
</dbReference>
<dbReference type="DrugBank" id="DB12752">
    <property type="generic name" value="Bucindolol"/>
</dbReference>
<dbReference type="DrugBank" id="DB06726">
    <property type="generic name" value="Bufuralol"/>
</dbReference>
<dbReference type="DrugBank" id="DB08808">
    <property type="generic name" value="Bupranolol"/>
</dbReference>
<dbReference type="DrugBank" id="DB00248">
    <property type="generic name" value="Cabergoline"/>
</dbReference>
<dbReference type="DrugBank" id="DB15784">
    <property type="generic name" value="Carmoterol"/>
</dbReference>
<dbReference type="DrugBank" id="DB00521">
    <property type="generic name" value="Carteolol"/>
</dbReference>
<dbReference type="DrugBank" id="DB01136">
    <property type="generic name" value="Carvedilol"/>
</dbReference>
<dbReference type="DrugBank" id="DB04846">
    <property type="generic name" value="Celiprolol"/>
</dbReference>
<dbReference type="DrugBank" id="DB01407">
    <property type="generic name" value="Clenbuterol"/>
</dbReference>
<dbReference type="DrugBank" id="DB00785">
    <property type="generic name" value="Cryptenamine"/>
</dbReference>
<dbReference type="DrugBank" id="DB01151">
    <property type="generic name" value="Desipramine"/>
</dbReference>
<dbReference type="DrugBank" id="DB12803">
    <property type="generic name" value="Dichloroisoproterenol"/>
</dbReference>
<dbReference type="DrugBank" id="DB11273">
    <property type="generic name" value="Dihydroergocornine"/>
</dbReference>
<dbReference type="DrugBank" id="DB13345">
    <property type="generic name" value="Dihydroergocristine"/>
</dbReference>
<dbReference type="DrugBank" id="DB00449">
    <property type="generic name" value="Dipivefrin"/>
</dbReference>
<dbReference type="DrugBank" id="DB11278">
    <property type="generic name" value="DL-Methylephedrine"/>
</dbReference>
<dbReference type="DrugBank" id="DB00841">
    <property type="generic name" value="Dobutamine"/>
</dbReference>
<dbReference type="DrugBank" id="DB09273">
    <property type="generic name" value="Doxofylline"/>
</dbReference>
<dbReference type="DrugBank" id="DB06262">
    <property type="generic name" value="Droxidopa"/>
</dbReference>
<dbReference type="DrugBank" id="DB01363">
    <property type="generic name" value="Ephedra sinica root"/>
</dbReference>
<dbReference type="DrugBank" id="DB01364">
    <property type="generic name" value="Ephedrine"/>
</dbReference>
<dbReference type="DrugBank" id="DB00668">
    <property type="generic name" value="Epinephrine"/>
</dbReference>
<dbReference type="DrugBank" id="DB01049">
    <property type="generic name" value="Ergoloid mesylate"/>
</dbReference>
<dbReference type="DrugBank" id="DB11587">
    <property type="generic name" value="Etafedrine"/>
</dbReference>
<dbReference type="DrugBank" id="DB01288">
    <property type="generic name" value="Fenoterol"/>
</dbReference>
<dbReference type="DrugBank" id="DB00983">
    <property type="generic name" value="Formoterol"/>
</dbReference>
<dbReference type="DrugBank" id="DB04946">
    <property type="generic name" value="Iloperidone"/>
</dbReference>
<dbReference type="DrugBank" id="DB05039">
    <property type="generic name" value="Indacaterol"/>
</dbReference>
<dbReference type="DrugBank" id="DB00221">
    <property type="generic name" value="Isoetharine"/>
</dbReference>
<dbReference type="DrugBank" id="DB01064">
    <property type="generic name" value="Isoprenaline"/>
</dbReference>
<dbReference type="DrugBank" id="DB00598">
    <property type="generic name" value="Labetalol"/>
</dbReference>
<dbReference type="DrugBank" id="DB01210">
    <property type="generic name" value="Levobunolol"/>
</dbReference>
<dbReference type="DrugBank" id="DB13139">
    <property type="generic name" value="Levosalbutamol"/>
</dbReference>
<dbReference type="DrugBank" id="DB01365">
    <property type="generic name" value="Mephentermine"/>
</dbReference>
<dbReference type="DrugBank" id="DB13624">
    <property type="generic name" value="Methoxyphenamine"/>
</dbReference>
<dbReference type="DrugBank" id="DB01214">
    <property type="generic name" value="Metipranolol"/>
</dbReference>
<dbReference type="DrugBank" id="DB00264">
    <property type="generic name" value="Metoprolol"/>
</dbReference>
<dbReference type="DrugBank" id="DB01203">
    <property type="generic name" value="Nadolol"/>
</dbReference>
<dbReference type="DrugBank" id="DB05849">
    <property type="generic name" value="NCX 950"/>
</dbReference>
<dbReference type="DrugBank" id="DB04861">
    <property type="generic name" value="Nebivolol"/>
</dbReference>
<dbReference type="DrugBank" id="DB00368">
    <property type="generic name" value="Norepinephrine"/>
</dbReference>
<dbReference type="DrugBank" id="DB00540">
    <property type="generic name" value="Nortriptyline"/>
</dbReference>
<dbReference type="DrugBank" id="DB00334">
    <property type="generic name" value="Olanzapine"/>
</dbReference>
<dbReference type="DrugBank" id="DB09080">
    <property type="generic name" value="Olodaterol"/>
</dbReference>
<dbReference type="DrugBank" id="DB00816">
    <property type="generic name" value="Orciprenaline"/>
</dbReference>
<dbReference type="DrugBank" id="DB01580">
    <property type="generic name" value="Oxprenolol"/>
</dbReference>
<dbReference type="DrugBank" id="DB00715">
    <property type="generic name" value="Paroxetine"/>
</dbReference>
<dbReference type="DrugBank" id="DB01359">
    <property type="generic name" value="Penbutolol"/>
</dbReference>
<dbReference type="DrugBank" id="DB11871">
    <property type="generic name" value="PF-00610355"/>
</dbReference>
<dbReference type="DrugBank" id="DB00925">
    <property type="generic name" value="Phenoxybenzamine"/>
</dbReference>
<dbReference type="DrugBank" id="DB00397">
    <property type="generic name" value="Phenylpropanolamine"/>
</dbReference>
<dbReference type="DrugBank" id="DB00960">
    <property type="generic name" value="Pindolol"/>
</dbReference>
<dbReference type="DrugBank" id="DB01291">
    <property type="generic name" value="Pirbuterol"/>
</dbReference>
<dbReference type="DrugBank" id="DB01366">
    <property type="generic name" value="Procaterol"/>
</dbReference>
<dbReference type="DrugBank" id="DB01182">
    <property type="generic name" value="Propafenone"/>
</dbReference>
<dbReference type="DrugBank" id="DB00571">
    <property type="generic name" value="Propranolol"/>
</dbReference>
<dbReference type="DrugBank" id="DB06814">
    <property type="generic name" value="Protokylol"/>
</dbReference>
<dbReference type="DrugBank" id="DB00852">
    <property type="generic name" value="Pseudoephedrine"/>
</dbReference>
<dbReference type="DrugBank" id="DB01917">
    <property type="generic name" value="Putrescine"/>
</dbReference>
<dbReference type="DrugBank" id="DB06483">
    <property type="generic name" value="PW2101"/>
</dbReference>
<dbReference type="DrugBank" id="DB11124">
    <property type="generic name" value="Racepinephrine"/>
</dbReference>
<dbReference type="DrugBank" id="DB00867">
    <property type="generic name" value="Ritodrine"/>
</dbReference>
<dbReference type="DrugBank" id="DB00938">
    <property type="generic name" value="Salmeterol"/>
</dbReference>
<dbReference type="DrugBank" id="DB00489">
    <property type="generic name" value="Sotalol"/>
</dbReference>
<dbReference type="DrugBank" id="DB03566">
    <property type="generic name" value="Spermidine"/>
</dbReference>
<dbReference type="DrugBank" id="DB00127">
    <property type="generic name" value="Spermine"/>
</dbReference>
<dbReference type="DrugBank" id="DB00871">
    <property type="generic name" value="Terbutaline"/>
</dbReference>
<dbReference type="DrugBank" id="DB00373">
    <property type="generic name" value="Timolol"/>
</dbReference>
<dbReference type="DrugBank" id="DB00726">
    <property type="generic name" value="Trimipramine"/>
</dbReference>
<dbReference type="DrugBank" id="DB12248">
    <property type="generic name" value="Tulobuterol"/>
</dbReference>
<dbReference type="DrugBank" id="DB09082">
    <property type="generic name" value="Vilanterol"/>
</dbReference>
<dbReference type="DrugBank" id="DB09185">
    <property type="generic name" value="Viloxazine"/>
</dbReference>
<dbReference type="DrugCentral" id="P07550"/>
<dbReference type="GuidetoPHARMACOLOGY" id="29"/>
<dbReference type="MoonDB" id="P07550">
    <property type="type" value="Predicted"/>
</dbReference>
<dbReference type="TCDB" id="9.A.14.3.5">
    <property type="family name" value="the g-protein-coupled receptor (gpcr) family"/>
</dbReference>
<dbReference type="GlyCosmos" id="P07550">
    <property type="glycosylation" value="2 sites, No reported glycans"/>
</dbReference>
<dbReference type="GlyGen" id="P07550">
    <property type="glycosylation" value="6 sites, 1 O-linked glycan (1 site)"/>
</dbReference>
<dbReference type="iPTMnet" id="P07550"/>
<dbReference type="PhosphoSitePlus" id="P07550"/>
<dbReference type="SwissPalm" id="P07550"/>
<dbReference type="BioMuta" id="ADRB2"/>
<dbReference type="DMDM" id="296439450"/>
<dbReference type="jPOST" id="P07550"/>
<dbReference type="MassIVE" id="P07550"/>
<dbReference type="PaxDb" id="9606-ENSP00000305372"/>
<dbReference type="PeptideAtlas" id="P07550"/>
<dbReference type="ProteomicsDB" id="52013"/>
<dbReference type="ABCD" id="P07550">
    <property type="antibodies" value="44 sequenced antibodies"/>
</dbReference>
<dbReference type="Antibodypedia" id="15959">
    <property type="antibodies" value="1143 antibodies from 43 providers"/>
</dbReference>
<dbReference type="DNASU" id="154"/>
<dbReference type="Ensembl" id="ENST00000305988.6">
    <property type="protein sequence ID" value="ENSP00000305372.4"/>
    <property type="gene ID" value="ENSG00000169252.6"/>
</dbReference>
<dbReference type="GeneID" id="154"/>
<dbReference type="KEGG" id="hsa:154"/>
<dbReference type="MANE-Select" id="ENST00000305988.6">
    <property type="protein sequence ID" value="ENSP00000305372.4"/>
    <property type="RefSeq nucleotide sequence ID" value="NM_000024.6"/>
    <property type="RefSeq protein sequence ID" value="NP_000015.2"/>
</dbReference>
<dbReference type="AGR" id="HGNC:286"/>
<dbReference type="CTD" id="154"/>
<dbReference type="DisGeNET" id="154"/>
<dbReference type="GeneCards" id="ADRB2"/>
<dbReference type="HGNC" id="HGNC:286">
    <property type="gene designation" value="ADRB2"/>
</dbReference>
<dbReference type="HPA" id="ENSG00000169252">
    <property type="expression patterns" value="Low tissue specificity"/>
</dbReference>
<dbReference type="MalaCards" id="ADRB2"/>
<dbReference type="MIM" id="109690">
    <property type="type" value="gene+phenotype"/>
</dbReference>
<dbReference type="neXtProt" id="NX_P07550"/>
<dbReference type="OpenTargets" id="ENSG00000169252"/>
<dbReference type="PharmGKB" id="PA39"/>
<dbReference type="VEuPathDB" id="HostDB:ENSG00000169252"/>
<dbReference type="eggNOG" id="KOG3656">
    <property type="taxonomic scope" value="Eukaryota"/>
</dbReference>
<dbReference type="GeneTree" id="ENSGT00940000159538"/>
<dbReference type="HOGENOM" id="CLU_009579_11_0_1"/>
<dbReference type="InParanoid" id="P07550"/>
<dbReference type="OMA" id="CEFWISI"/>
<dbReference type="OrthoDB" id="5975661at2759"/>
<dbReference type="PAN-GO" id="P07550">
    <property type="GO annotations" value="6 GO annotations based on evolutionary models"/>
</dbReference>
<dbReference type="PhylomeDB" id="P07550"/>
<dbReference type="TreeFam" id="TF316350"/>
<dbReference type="PathwayCommons" id="P07550"/>
<dbReference type="Reactome" id="R-HSA-390696">
    <property type="pathway name" value="Adrenoceptors"/>
</dbReference>
<dbReference type="Reactome" id="R-HSA-418555">
    <property type="pathway name" value="G alpha (s) signalling events"/>
</dbReference>
<dbReference type="Reactome" id="R-HSA-5689880">
    <property type="pathway name" value="Ub-specific processing proteases"/>
</dbReference>
<dbReference type="Reactome" id="R-HSA-8856825">
    <property type="pathway name" value="Cargo recognition for clathrin-mediated endocytosis"/>
</dbReference>
<dbReference type="Reactome" id="R-HSA-8856828">
    <property type="pathway name" value="Clathrin-mediated endocytosis"/>
</dbReference>
<dbReference type="SignaLink" id="P07550"/>
<dbReference type="SIGNOR" id="P07550"/>
<dbReference type="BioGRID-ORCS" id="154">
    <property type="hits" value="10 hits in 1160 CRISPR screens"/>
</dbReference>
<dbReference type="ChiTaRS" id="ADRB2">
    <property type="organism name" value="human"/>
</dbReference>
<dbReference type="EvolutionaryTrace" id="P07550"/>
<dbReference type="GeneWiki" id="Beta-2_adrenergic_receptor"/>
<dbReference type="GenomeRNAi" id="154"/>
<dbReference type="Pharos" id="P07550">
    <property type="development level" value="Tclin"/>
</dbReference>
<dbReference type="PRO" id="PR:P07550"/>
<dbReference type="Proteomes" id="UP000005640">
    <property type="component" value="Chromosome 5"/>
</dbReference>
<dbReference type="RNAct" id="P07550">
    <property type="molecule type" value="protein"/>
</dbReference>
<dbReference type="Bgee" id="ENSG00000169252">
    <property type="expression patterns" value="Expressed in cartilage tissue and 162 other cell types or tissues"/>
</dbReference>
<dbReference type="ExpressionAtlas" id="P07550">
    <property type="expression patterns" value="baseline and differential"/>
</dbReference>
<dbReference type="GO" id="GO:0016324">
    <property type="term" value="C:apical plasma membrane"/>
    <property type="evidence" value="ECO:0007669"/>
    <property type="project" value="Ensembl"/>
</dbReference>
<dbReference type="GO" id="GO:0036064">
    <property type="term" value="C:ciliary basal body"/>
    <property type="evidence" value="ECO:0000314"/>
    <property type="project" value="HPA"/>
</dbReference>
<dbReference type="GO" id="GO:0005929">
    <property type="term" value="C:cilium"/>
    <property type="evidence" value="ECO:0000314"/>
    <property type="project" value="HPA"/>
</dbReference>
<dbReference type="GO" id="GO:0030669">
    <property type="term" value="C:clathrin-coated endocytic vesicle membrane"/>
    <property type="evidence" value="ECO:0000304"/>
    <property type="project" value="Reactome"/>
</dbReference>
<dbReference type="GO" id="GO:0005769">
    <property type="term" value="C:early endosome"/>
    <property type="evidence" value="ECO:0007669"/>
    <property type="project" value="UniProtKB-SubCell"/>
</dbReference>
<dbReference type="GO" id="GO:0005768">
    <property type="term" value="C:endosome"/>
    <property type="evidence" value="ECO:0000304"/>
    <property type="project" value="ProtInc"/>
</dbReference>
<dbReference type="GO" id="GO:0010008">
    <property type="term" value="C:endosome membrane"/>
    <property type="evidence" value="ECO:0000304"/>
    <property type="project" value="Reactome"/>
</dbReference>
<dbReference type="GO" id="GO:0005794">
    <property type="term" value="C:Golgi apparatus"/>
    <property type="evidence" value="ECO:0000314"/>
    <property type="project" value="UniProtKB"/>
</dbReference>
<dbReference type="GO" id="GO:0045171">
    <property type="term" value="C:intercellular bridge"/>
    <property type="evidence" value="ECO:0000314"/>
    <property type="project" value="HPA"/>
</dbReference>
<dbReference type="GO" id="GO:0005764">
    <property type="term" value="C:lysosome"/>
    <property type="evidence" value="ECO:0000304"/>
    <property type="project" value="ProtInc"/>
</dbReference>
<dbReference type="GO" id="GO:0016020">
    <property type="term" value="C:membrane"/>
    <property type="evidence" value="ECO:0000303"/>
    <property type="project" value="ARUK-UCL"/>
</dbReference>
<dbReference type="GO" id="GO:0015630">
    <property type="term" value="C:microtubule cytoskeleton"/>
    <property type="evidence" value="ECO:0000314"/>
    <property type="project" value="HPA"/>
</dbReference>
<dbReference type="GO" id="GO:0072686">
    <property type="term" value="C:mitotic spindle"/>
    <property type="evidence" value="ECO:0000314"/>
    <property type="project" value="HPA"/>
</dbReference>
<dbReference type="GO" id="GO:0098992">
    <property type="term" value="C:neuronal dense core vesicle"/>
    <property type="evidence" value="ECO:0007669"/>
    <property type="project" value="Ensembl"/>
</dbReference>
<dbReference type="GO" id="GO:0005634">
    <property type="term" value="C:nucleus"/>
    <property type="evidence" value="ECO:0007669"/>
    <property type="project" value="Ensembl"/>
</dbReference>
<dbReference type="GO" id="GO:0005886">
    <property type="term" value="C:plasma membrane"/>
    <property type="evidence" value="ECO:0000314"/>
    <property type="project" value="UniProtKB"/>
</dbReference>
<dbReference type="GO" id="GO:0043235">
    <property type="term" value="C:receptor complex"/>
    <property type="evidence" value="ECO:0000314"/>
    <property type="project" value="HGNC-UCL"/>
</dbReference>
<dbReference type="GO" id="GO:0008179">
    <property type="term" value="F:adenylate cyclase binding"/>
    <property type="evidence" value="ECO:0007669"/>
    <property type="project" value="Ensembl"/>
</dbReference>
<dbReference type="GO" id="GO:0001540">
    <property type="term" value="F:amyloid-beta binding"/>
    <property type="evidence" value="ECO:0000314"/>
    <property type="project" value="ARUK-UCL"/>
</dbReference>
<dbReference type="GO" id="GO:0004941">
    <property type="term" value="F:beta2-adrenergic receptor activity"/>
    <property type="evidence" value="ECO:0000314"/>
    <property type="project" value="HGNC-UCL"/>
</dbReference>
<dbReference type="GO" id="GO:0042802">
    <property type="term" value="F:identical protein binding"/>
    <property type="evidence" value="ECO:0000353"/>
    <property type="project" value="IntAct"/>
</dbReference>
<dbReference type="GO" id="GO:0051380">
    <property type="term" value="F:norepinephrine binding"/>
    <property type="evidence" value="ECO:0000314"/>
    <property type="project" value="HGNC-UCL"/>
</dbReference>
<dbReference type="GO" id="GO:0015459">
    <property type="term" value="F:potassium channel regulator activity"/>
    <property type="evidence" value="ECO:0000314"/>
    <property type="project" value="BHF-UCL"/>
</dbReference>
<dbReference type="GO" id="GO:0042803">
    <property type="term" value="F:protein homodimerization activity"/>
    <property type="evidence" value="ECO:0000353"/>
    <property type="project" value="HGNC-UCL"/>
</dbReference>
<dbReference type="GO" id="GO:0044877">
    <property type="term" value="F:protein-containing complex binding"/>
    <property type="evidence" value="ECO:0000353"/>
    <property type="project" value="ARUK-UCL"/>
</dbReference>
<dbReference type="GO" id="GO:0071880">
    <property type="term" value="P:adenylate cyclase-activating adrenergic receptor signaling pathway"/>
    <property type="evidence" value="ECO:0000314"/>
    <property type="project" value="HGNC-UCL"/>
</dbReference>
<dbReference type="GO" id="GO:0007188">
    <property type="term" value="P:adenylate cyclase-modulating G protein-coupled receptor signaling pathway"/>
    <property type="evidence" value="ECO:0000304"/>
    <property type="project" value="ProtInc"/>
</dbReference>
<dbReference type="GO" id="GO:0071875">
    <property type="term" value="P:adrenergic receptor signaling pathway"/>
    <property type="evidence" value="ECO:0000314"/>
    <property type="project" value="CAFA"/>
</dbReference>
<dbReference type="GO" id="GO:0098990">
    <property type="term" value="P:AMPA selective glutamate receptor signaling pathway"/>
    <property type="evidence" value="ECO:0000316"/>
    <property type="project" value="ARUK-UCL"/>
</dbReference>
<dbReference type="GO" id="GO:0045453">
    <property type="term" value="P:bone resorption"/>
    <property type="evidence" value="ECO:0007669"/>
    <property type="project" value="Ensembl"/>
</dbReference>
<dbReference type="GO" id="GO:0050873">
    <property type="term" value="P:brown fat cell differentiation"/>
    <property type="evidence" value="ECO:0007669"/>
    <property type="project" value="Ensembl"/>
</dbReference>
<dbReference type="GO" id="GO:0007166">
    <property type="term" value="P:cell surface receptor signaling pathway"/>
    <property type="evidence" value="ECO:0000304"/>
    <property type="project" value="ProtInc"/>
</dbReference>
<dbReference type="GO" id="GO:1904646">
    <property type="term" value="P:cellular response to amyloid-beta"/>
    <property type="evidence" value="ECO:0000316"/>
    <property type="project" value="ARUK-UCL"/>
</dbReference>
<dbReference type="GO" id="GO:0002024">
    <property type="term" value="P:diet induced thermogenesis"/>
    <property type="evidence" value="ECO:0007669"/>
    <property type="project" value="Ensembl"/>
</dbReference>
<dbReference type="GO" id="GO:0008333">
    <property type="term" value="P:endosome to lysosome transport"/>
    <property type="evidence" value="ECO:0000304"/>
    <property type="project" value="ProtInc"/>
</dbReference>
<dbReference type="GO" id="GO:0031649">
    <property type="term" value="P:heat generation"/>
    <property type="evidence" value="ECO:0007669"/>
    <property type="project" value="Ensembl"/>
</dbReference>
<dbReference type="GO" id="GO:0045744">
    <property type="term" value="P:negative regulation of G protein-coupled receptor signaling pathway"/>
    <property type="evidence" value="ECO:0000314"/>
    <property type="project" value="HGNC-UCL"/>
</dbReference>
<dbReference type="GO" id="GO:0040015">
    <property type="term" value="P:negative regulation of multicellular organism growth"/>
    <property type="evidence" value="ECO:0007669"/>
    <property type="project" value="Ensembl"/>
</dbReference>
<dbReference type="GO" id="GO:0045986">
    <property type="term" value="P:negative regulation of smooth muscle contraction"/>
    <property type="evidence" value="ECO:0007669"/>
    <property type="project" value="Ensembl"/>
</dbReference>
<dbReference type="GO" id="GO:0002025">
    <property type="term" value="P:norepinephrine-epinephrine-mediated vasodilation involved in regulation of systemic arterial blood pressure"/>
    <property type="evidence" value="ECO:0000318"/>
    <property type="project" value="GO_Central"/>
</dbReference>
<dbReference type="GO" id="GO:1901098">
    <property type="term" value="P:positive regulation of autophagosome maturation"/>
    <property type="evidence" value="ECO:0000314"/>
    <property type="project" value="GO_Central"/>
</dbReference>
<dbReference type="GO" id="GO:0030501">
    <property type="term" value="P:positive regulation of bone mineralization"/>
    <property type="evidence" value="ECO:0007669"/>
    <property type="project" value="Ensembl"/>
</dbReference>
<dbReference type="GO" id="GO:0141163">
    <property type="term" value="P:positive regulation of cAMP/PKA signal transduction"/>
    <property type="evidence" value="ECO:0000316"/>
    <property type="project" value="ARUK-UCL"/>
</dbReference>
<dbReference type="GO" id="GO:0120162">
    <property type="term" value="P:positive regulation of cold-induced thermogenesis"/>
    <property type="evidence" value="ECO:0000250"/>
    <property type="project" value="YuBioLab"/>
</dbReference>
<dbReference type="GO" id="GO:1904504">
    <property type="term" value="P:positive regulation of lipophagy"/>
    <property type="evidence" value="ECO:0000314"/>
    <property type="project" value="GO_Central"/>
</dbReference>
<dbReference type="GO" id="GO:0043410">
    <property type="term" value="P:positive regulation of MAPK cascade"/>
    <property type="evidence" value="ECO:0000314"/>
    <property type="project" value="HGNC-UCL"/>
</dbReference>
<dbReference type="GO" id="GO:0061885">
    <property type="term" value="P:positive regulation of mini excitatory postsynaptic potential"/>
    <property type="evidence" value="ECO:0007669"/>
    <property type="project" value="Ensembl"/>
</dbReference>
<dbReference type="GO" id="GO:0045944">
    <property type="term" value="P:positive regulation of transcription by RNA polymerase II"/>
    <property type="evidence" value="ECO:0007669"/>
    <property type="project" value="Ensembl"/>
</dbReference>
<dbReference type="GO" id="GO:0006898">
    <property type="term" value="P:receptor-mediated endocytosis"/>
    <property type="evidence" value="ECO:0000314"/>
    <property type="project" value="HGNC-UCL"/>
</dbReference>
<dbReference type="GO" id="GO:0002028">
    <property type="term" value="P:regulation of sodium ion transport"/>
    <property type="evidence" value="ECO:0007669"/>
    <property type="project" value="Ensembl"/>
</dbReference>
<dbReference type="GO" id="GO:0009409">
    <property type="term" value="P:response to cold"/>
    <property type="evidence" value="ECO:0007669"/>
    <property type="project" value="Ensembl"/>
</dbReference>
<dbReference type="GO" id="GO:1990911">
    <property type="term" value="P:response to psychosocial stress"/>
    <property type="evidence" value="ECO:0000304"/>
    <property type="project" value="ARUK-UCL"/>
</dbReference>
<dbReference type="GO" id="GO:0006939">
    <property type="term" value="P:smooth muscle contraction"/>
    <property type="evidence" value="ECO:0007669"/>
    <property type="project" value="Ensembl"/>
</dbReference>
<dbReference type="GO" id="GO:0006366">
    <property type="term" value="P:transcription by RNA polymerase II"/>
    <property type="evidence" value="ECO:0007669"/>
    <property type="project" value="Ensembl"/>
</dbReference>
<dbReference type="CDD" id="cd15957">
    <property type="entry name" value="7tmA_Beta2_AR"/>
    <property type="match status" value="1"/>
</dbReference>
<dbReference type="FunFam" id="1.20.1070.10:FF:000057">
    <property type="entry name" value="Beta-1 adrenergic receptor"/>
    <property type="match status" value="1"/>
</dbReference>
<dbReference type="Gene3D" id="1.20.1070.10">
    <property type="entry name" value="Rhodopsin 7-helix transmembrane proteins"/>
    <property type="match status" value="1"/>
</dbReference>
<dbReference type="InterPro" id="IPR002233">
    <property type="entry name" value="ADR_fam"/>
</dbReference>
<dbReference type="InterPro" id="IPR000332">
    <property type="entry name" value="ADRB2_rcpt"/>
</dbReference>
<dbReference type="InterPro" id="IPR000276">
    <property type="entry name" value="GPCR_Rhodpsn"/>
</dbReference>
<dbReference type="InterPro" id="IPR017452">
    <property type="entry name" value="GPCR_Rhodpsn_7TM"/>
</dbReference>
<dbReference type="PANTHER" id="PTHR24248">
    <property type="entry name" value="ADRENERGIC RECEPTOR-RELATED G-PROTEIN COUPLED RECEPTOR"/>
    <property type="match status" value="1"/>
</dbReference>
<dbReference type="PANTHER" id="PTHR24248:SF21">
    <property type="entry name" value="BETA-2 ADRENERGIC RECEPTOR"/>
    <property type="match status" value="1"/>
</dbReference>
<dbReference type="Pfam" id="PF00001">
    <property type="entry name" value="7tm_1"/>
    <property type="match status" value="1"/>
</dbReference>
<dbReference type="PRINTS" id="PR01103">
    <property type="entry name" value="ADRENERGICR"/>
</dbReference>
<dbReference type="PRINTS" id="PR00562">
    <property type="entry name" value="ADRENRGCB2AR"/>
</dbReference>
<dbReference type="PRINTS" id="PR00237">
    <property type="entry name" value="GPCRRHODOPSN"/>
</dbReference>
<dbReference type="SMART" id="SM01381">
    <property type="entry name" value="7TM_GPCR_Srsx"/>
    <property type="match status" value="1"/>
</dbReference>
<dbReference type="SUPFAM" id="SSF81321">
    <property type="entry name" value="Family A G protein-coupled receptor-like"/>
    <property type="match status" value="1"/>
</dbReference>
<dbReference type="PROSITE" id="PS00237">
    <property type="entry name" value="G_PROTEIN_RECEP_F1_1"/>
    <property type="match status" value="1"/>
</dbReference>
<dbReference type="PROSITE" id="PS50262">
    <property type="entry name" value="G_PROTEIN_RECEP_F1_2"/>
    <property type="match status" value="1"/>
</dbReference>
<comment type="function">
    <text evidence="23 30">Beta-adrenergic receptors mediate the catecholamine-induced activation of adenylate cyclase through the action of G proteins. The beta-2-adrenergic receptor binds epinephrine with an approximately 30-fold greater affinity than it does norepinephrine.</text>
</comment>
<comment type="subunit">
    <text evidence="4 7 9 10 11 12 13 14 15 16 17 18 19 29 33 34">Binds NHERF1 and GPRASP1. Interacts with ARRB1 and ARRB2. Interacts with SRC (PubMed:9924018). Interacts with USP20 and USP33 (PubMed:19424180, PubMed:23166351). Interacts with VHL; the interaction, which is increased on hydroxylation of ADRB2, ubiquitinates ADRB2 leading to its degradation. Interacts with EGLN3; the interaction hydroxylates ADRB2 facilitating VHL-E3 ligase-mediated ubiquitination. Interacts (via PDZ-binding motif) with SNX27 (via PDZ domain); the interaction is required when endocytosed to prevent degradation in lysosomes and promote recycling to the plasma membrane. Interacts with CNIH4 (PubMed:24405750). Interacts with ARRDC3 (PubMed:20559325, PubMed:25220262). Interacts with NEDD4 (PubMed:23166351). Interacts with MARCHF2 (PubMed:23166351).</text>
</comment>
<comment type="interaction">
    <interactant intactId="EBI-491169">
        <id>P07550</id>
    </interactant>
    <interactant intactId="EBI-2903663">
        <id>P30542</id>
        <label>ADORA1</label>
    </interactant>
    <organismsDiffer>false</organismsDiffer>
    <experiments>5</experiments>
</comment>
<comment type="interaction">
    <interactant intactId="EBI-491169">
        <id>P07550</id>
    </interactant>
    <interactant intactId="EBI-491169">
        <id>P07550</id>
        <label>ADRB2</label>
    </interactant>
    <organismsDiffer>false</organismsDiffer>
    <experiments>4</experiments>
</comment>
<comment type="interaction">
    <interactant intactId="EBI-491169">
        <id>P07550</id>
    </interactant>
    <interactant intactId="EBI-714559">
        <id>P32121</id>
        <label>ARRB2</label>
    </interactant>
    <organismsDiffer>false</organismsDiffer>
    <experiments>3</experiments>
</comment>
<comment type="interaction">
    <interactant intactId="EBI-491169">
        <id>P07550</id>
    </interactant>
    <interactant intactId="EBI-2875665">
        <id>Q96B67</id>
        <label>ARRDC3</label>
    </interactant>
    <organismsDiffer>false</organismsDiffer>
    <experiments>6</experiments>
</comment>
<comment type="interaction">
    <interactant intactId="EBI-491169">
        <id>P07550</id>
    </interactant>
    <interactant intactId="EBI-718459">
        <id>Q9UII2</id>
        <label>ATP5IF1</label>
    </interactant>
    <organismsDiffer>false</organismsDiffer>
    <experiments>3</experiments>
</comment>
<comment type="interaction">
    <interactant intactId="EBI-491169">
        <id>P07550</id>
    </interactant>
    <interactant intactId="EBI-23662416">
        <id>Q9ULD4-2</id>
        <label>BRPF3</label>
    </interactant>
    <organismsDiffer>false</organismsDiffer>
    <experiments>3</experiments>
</comment>
<comment type="interaction">
    <interactant intactId="EBI-491169">
        <id>P07550</id>
    </interactant>
    <interactant intactId="EBI-10693038">
        <id>Q9NSI6-4</id>
        <label>BRWD1</label>
    </interactant>
    <organismsDiffer>false</organismsDiffer>
    <experiments>3</experiments>
</comment>
<comment type="interaction">
    <interactant intactId="EBI-491169">
        <id>P07550</id>
    </interactant>
    <interactant intactId="EBI-21796846">
        <id>Q5M9N0-2</id>
        <label>CCDC158</label>
    </interactant>
    <organismsDiffer>false</organismsDiffer>
    <experiments>3</experiments>
</comment>
<comment type="interaction">
    <interactant intactId="EBI-491169">
        <id>P07550</id>
    </interactant>
    <interactant intactId="EBI-7779316">
        <id>A0AVK6</id>
        <label>E2F8</label>
    </interactant>
    <organismsDiffer>false</organismsDiffer>
    <experiments>3</experiments>
</comment>
<comment type="interaction">
    <interactant intactId="EBI-491169">
        <id>P07550</id>
    </interactant>
    <interactant intactId="EBI-10248874">
        <id>Q658K8</id>
        <label>EEF1DP3</label>
    </interactant>
    <organismsDiffer>false</organismsDiffer>
    <experiments>3</experiments>
</comment>
<comment type="interaction">
    <interactant intactId="EBI-491169">
        <id>P07550</id>
    </interactant>
    <interactant intactId="EBI-395274">
        <id>O00472</id>
        <label>ELL2</label>
    </interactant>
    <organismsDiffer>false</organismsDiffer>
    <experiments>3</experiments>
</comment>
<comment type="interaction">
    <interactant intactId="EBI-491169">
        <id>P07550</id>
    </interactant>
    <interactant intactId="EBI-10699473">
        <id>Q15910-2</id>
        <label>EZH2</label>
    </interactant>
    <organismsDiffer>false</organismsDiffer>
    <experiments>3</experiments>
</comment>
<comment type="interaction">
    <interactant intactId="EBI-491169">
        <id>P07550</id>
    </interactant>
    <interactant intactId="EBI-712457">
        <id>Q15486</id>
        <label>GUSBP1</label>
    </interactant>
    <organismsDiffer>false</organismsDiffer>
    <experiments>3</experiments>
</comment>
<comment type="interaction">
    <interactant intactId="EBI-491169">
        <id>P07550</id>
    </interactant>
    <interactant intactId="EBI-304185">
        <id>P61978</id>
        <label>HNRNPK</label>
    </interactant>
    <organismsDiffer>false</organismsDiffer>
    <experiments>2</experiments>
</comment>
<comment type="interaction">
    <interactant intactId="EBI-491169">
        <id>P07550</id>
    </interactant>
    <interactant intactId="EBI-310506">
        <id>Q5TCQ9</id>
        <label>MAGI3</label>
    </interactant>
    <organismsDiffer>false</organismsDiffer>
    <experiments>9</experiments>
</comment>
<comment type="interaction">
    <interactant intactId="EBI-491169">
        <id>P07550</id>
    </interactant>
    <interactant intactId="EBI-721306">
        <id>Q99685</id>
        <label>MGLL</label>
    </interactant>
    <organismsDiffer>false</organismsDiffer>
    <experiments>2</experiments>
</comment>
<comment type="interaction">
    <interactant intactId="EBI-491169">
        <id>P07550</id>
    </interactant>
    <interactant intactId="EBI-349787">
        <id>O14745</id>
        <label>NHERF1</label>
    </interactant>
    <organismsDiffer>false</organismsDiffer>
    <experiments>6</experiments>
</comment>
<comment type="interaction">
    <interactant intactId="EBI-491169">
        <id>P07550</id>
    </interactant>
    <interactant intactId="EBI-17159452">
        <id>Q9NR21-5</id>
        <label>PARP11</label>
    </interactant>
    <organismsDiffer>false</organismsDiffer>
    <experiments>3</experiments>
</comment>
<comment type="interaction">
    <interactant intactId="EBI-491169">
        <id>P07550</id>
    </interactant>
    <interactant intactId="EBI-749039">
        <id>Q8WVD3</id>
        <label>RNF138</label>
    </interactant>
    <organismsDiffer>false</organismsDiffer>
    <experiments>3</experiments>
</comment>
<comment type="interaction">
    <interactant intactId="EBI-491169">
        <id>P07550</id>
    </interactant>
    <interactant intactId="EBI-751555">
        <id>Q9H0X6</id>
        <label>RNF208</label>
    </interactant>
    <organismsDiffer>false</organismsDiffer>
    <experiments>3</experiments>
</comment>
<comment type="interaction">
    <interactant intactId="EBI-491169">
        <id>P07550</id>
    </interactant>
    <interactant intactId="EBI-632715">
        <id>Q13573</id>
        <label>SNW1</label>
    </interactant>
    <organismsDiffer>false</organismsDiffer>
    <experiments>3</experiments>
</comment>
<comment type="interaction">
    <interactant intactId="EBI-491169">
        <id>P07550</id>
    </interactant>
    <interactant intactId="EBI-621482">
        <id>P12931</id>
        <label>SRC</label>
    </interactant>
    <organismsDiffer>false</organismsDiffer>
    <experiments>3</experiments>
</comment>
<comment type="interaction">
    <interactant intactId="EBI-491169">
        <id>P07550</id>
    </interactant>
    <interactant intactId="EBI-12833746">
        <id>Q5T0J7-2</id>
        <label>TEX35</label>
    </interactant>
    <organismsDiffer>false</organismsDiffer>
    <experiments>3</experiments>
</comment>
<comment type="interaction">
    <interactant intactId="EBI-491169">
        <id>P07550</id>
    </interactant>
    <interactant intactId="EBI-25830583">
        <id>Q8N0U2</id>
        <label>TMEM61</label>
    </interactant>
    <organismsDiffer>false</organismsDiffer>
    <experiments>3</experiments>
</comment>
<comment type="subcellular location">
    <subcellularLocation>
        <location evidence="13 14 17 19 23 30">Cell membrane</location>
        <topology evidence="13">Multi-pass membrane protein</topology>
    </subcellularLocation>
    <subcellularLocation>
        <location evidence="14">Early endosome</location>
    </subcellularLocation>
    <subcellularLocation>
        <location evidence="21">Golgi apparatus</location>
    </subcellularLocation>
    <text evidence="13 14 21">Colocalizes with VHL at the cell membrane (PubMed:19584355). Activated receptors are internalized into endosomes prior to their degradation in lysosomes (PubMed:20559325). Activated receptors are also detected within the Golgi apparatus (PubMed:27481942).</text>
</comment>
<comment type="PTM">
    <text evidence="5 10 11 20 21">Palmitoylated (PubMed:11146000, PubMed:17962520, PubMed:18547522, PubMed:2540197, PubMed:27481942). Mainly palmitoylated at Cys-341 (PubMed:17962520, PubMed:18547522, PubMed:2540197). Palmitoylation may reduce accessibility of phosphorylation sites by anchoring the receptor to the plasma membrane. Agonist stimulation promotes depalmitoylation and further allows Ser-345 and Ser-346 phosphorylation (PubMed:11146000). Also undergoes transient, ligand-induced palmitoylation at Cys-265 probably by ZDHHC9, ZDHHC14 and ZDHHC18 within the Golgi (PubMed:27481942). Palmitoylation at Cys-265 requires phosphorylation by PKA and receptor internalization and stabilizes the receptor (PubMed:27481942). Could be depalmitoylated by LYPLA1 at the plasma membrane (PubMed:27481942).</text>
</comment>
<comment type="PTM">
    <text>Phosphorylated by PKA and BARK upon agonist stimulation, which mediates homologous desensitization of the receptor. PKA-mediated phosphorylation seems to facilitate phosphorylation by BARK.</text>
</comment>
<comment type="PTM">
    <text evidence="32">Phosphorylation of Tyr-141 is induced by insulin and leads to supersensitization of the receptor.</text>
</comment>
<comment type="PTM">
    <text evidence="12 14 17">Polyubiquitinated (PubMed:23166351). Agonist-induced ubiquitination leads to sort internalized receptors to the lysosomes for degradation (PubMed:19424180, PubMed:20559325, PubMed:23166351). Deubiquitination by USP20 and USP33, leads to ADRB2 recycling and resensitization after prolonged agonist stimulation. USP20 and USP33 are constitutively associated and are dissociated immediately after agonist stimulation. Ubiquitination by the VHL-E3 ligase complex is oxygen-dependent.</text>
</comment>
<comment type="PTM">
    <text evidence="12 13">Hydroxylation by EGLN3 occurs only under normoxia and increases the interaction with VHL and the subsequent ubiquitination and degradation of ADRB2.</text>
</comment>
<comment type="polymorphism">
    <text>The Gly-16 allele is overrepresented in individuals affected by nocturnal asthma as compared to controls, and appears to be an important genetic factor in the expression of this asthmatic phenotype.</text>
</comment>
<comment type="similarity">
    <text evidence="2">Belongs to the G-protein coupled receptor 1 family. Adrenergic receptor subfamily. ADRB2 sub-subfamily.</text>
</comment>
<comment type="sequence caution" evidence="39">
    <conflict type="erroneous initiation">
        <sequence resource="EMBL-CDS" id="BAD96745"/>
    </conflict>
    <text>Extended N-terminus.</text>
</comment>
<sequence>MGQPGNGSAFLLAPNGSHAPDHDVTQERDEVWVVGMGIVMSLIVLAIVFGNVLVITAIAKFERLQTVTNYFITSLACADLVMGLAVVPFGAAHILMKMWTFGNFWCEFWTSIDVLCVTASIETLCVIAVDRYFAITSPFKYQSLLTKNKARVIILMVWIVSGLTSFLPIQMHWYRATHQEAINCYANETCCDFFTNQAYAIASSIVSFYVPLVIMVFVYSRVFQEAKRQLQKIDKSEGRFHVQNLSQVEQDGRTGHGLRRSSKFCLKEHKALKTLGIIMGTFTLCWLPFFIVNIVHVIQDNLIRKEVYILLNWIGYVNSGFNPLIYCRSPDFRIAFQELLCLRRSSLKAYGNGYSSNGNTGEQSGYHVEQEKENKLLCEDLPGTEDFVGHQGTVPSDNIDSQGRNCSTNDSLL</sequence>
<reference key="1">
    <citation type="journal article" date="1987" name="FEBS Lett.">
        <title>Cloning and sequence analysis of the human brain beta-adrenergic receptor. Evolutionary relationship to rodent and avian beta-receptors and porcine muscarinic receptors.</title>
        <authorList>
            <person name="Chung F.-Z."/>
            <person name="Lentes K.-U."/>
            <person name="Gocayne J.D."/>
            <person name="Fitzgerald M.G."/>
            <person name="Robinson D.A."/>
            <person name="Kerlavage A.R."/>
            <person name="Fraser C.M."/>
            <person name="Venter J.C."/>
        </authorList>
    </citation>
    <scope>NUCLEOTIDE SEQUENCE [MRNA]</scope>
    <scope>VARIANT GLN-27</scope>
    <source>
        <tissue>Brain</tissue>
    </source>
</reference>
<reference key="2">
    <citation type="journal article" date="1987" name="J. Biol. Chem.">
        <title>Delineation of the intronless nature of the genes for the human and hamster beta 2-adrenergic receptor and their putative promoter regions.</title>
        <authorList>
            <person name="Kobilka B.K."/>
            <person name="Frielle T."/>
            <person name="Dohlman H.G."/>
            <person name="Bolanowski M.A."/>
            <person name="Dixon R.A.F."/>
            <person name="Keller P."/>
            <person name="Caron M.G."/>
            <person name="Lefkowitz R.J."/>
        </authorList>
    </citation>
    <scope>NUCLEOTIDE SEQUENCE [GENOMIC DNA]</scope>
    <scope>VARIANTS ARG-16 AND GLN-27</scope>
</reference>
<reference key="3">
    <citation type="journal article" date="1987" name="Nucleic Acids Res.">
        <title>Primary structure of the human beta-adrenergic receptor gene.</title>
        <authorList>
            <person name="Schofield P.R."/>
            <person name="Rhee L.M."/>
            <person name="Peralta E.G."/>
        </authorList>
    </citation>
    <scope>NUCLEOTIDE SEQUENCE [GENOMIC DNA]</scope>
    <scope>VARIANTS ARG-16 AND GLN-27</scope>
</reference>
<reference key="4">
    <citation type="journal article" date="1987" name="Proc. Natl. Acad. Sci. U.S.A.">
        <title>cDNA for the human beta 2-adrenergic receptor: a protein with multiple membrane-spanning domains and encoded by a gene whose chromosomal location is shared with that of the receptor for platelet-derived growth factor.</title>
        <authorList>
            <person name="Kobilka B.K."/>
            <person name="Dixon R.A.F."/>
            <person name="Frielle T."/>
            <person name="Dohlman H.G."/>
            <person name="Bolanowski M.A."/>
            <person name="Sigal I.S."/>
            <person name="Yang-Feng T.L."/>
            <person name="Francke U."/>
            <person name="Caron M.G."/>
            <person name="Lefkowitz R.J."/>
        </authorList>
    </citation>
    <scope>NUCLEOTIDE SEQUENCE [MRNA]</scope>
    <scope>VARIANTS ARG-16 AND GLN-27</scope>
</reference>
<reference key="5">
    <citation type="journal article" date="1987" name="Proc. Natl. Acad. Sci. U.S.A.">
        <title>Structure of the gene for human beta 2-adrenergic receptor: expression and promoter characterization.</title>
        <authorList>
            <person name="Emorine L.J."/>
            <person name="Marullo S."/>
            <person name="Delavier-Klutchko C."/>
            <person name="Kaveri S.V."/>
            <person name="Durieu-Trautmann O."/>
            <person name="Strosberg A.D."/>
        </authorList>
    </citation>
    <scope>NUCLEOTIDE SEQUENCE [GENOMIC DNA]</scope>
    <scope>VARIANT GLN-27</scope>
</reference>
<reference key="6">
    <citation type="journal article" date="1993" name="Am. J. Respir. Cell Mol. Biol.">
        <title>Mutations in the gene encoding for the beta 2-adrenergic receptor in normal and asthmatic subjects.</title>
        <authorList>
            <person name="Reihsaus E."/>
            <person name="Innis M."/>
            <person name="Macintyre N."/>
            <person name="Liggett S.B."/>
        </authorList>
    </citation>
    <scope>NUCLEOTIDE SEQUENCE [GENOMIC DNA]</scope>
    <scope>VARIANTS ARG-16; GLN-27; MET-34 AND ILE-164</scope>
</reference>
<reference key="7">
    <citation type="journal article" date="2000" name="Ann. Hum. Genet.">
        <title>Beta2-adrenergic receptor allele frequencies in the Quechua, a high altitude native population.</title>
        <authorList>
            <person name="Rupert J.L."/>
            <person name="Monsalve M.V."/>
            <person name="Devine D.V."/>
            <person name="Hochachka P.W."/>
        </authorList>
    </citation>
    <scope>NUCLEOTIDE SEQUENCE [GENOMIC DNA]</scope>
    <scope>VARIANTS GLN-27; LEU-159; PHE-159 AND ARG-375</scope>
    <source>
        <tissue>Blood</tissue>
    </source>
</reference>
<reference key="8">
    <citation type="submission" date="2002-07" db="EMBL/GenBank/DDBJ databases">
        <title>cDNA clones of human proteins involved in signal transduction sequenced by the Guthrie cDNA resource center (www.cdna.org).</title>
        <authorList>
            <person name="Puhl H.L. III"/>
            <person name="Ikeda S.R."/>
            <person name="Aronstam R.S."/>
        </authorList>
    </citation>
    <scope>NUCLEOTIDE SEQUENCE [LARGE SCALE MRNA]</scope>
    <scope>VARIANTS ARG-16 AND GLN-27</scope>
    <source>
        <tissue>Heart</tissue>
    </source>
</reference>
<reference key="9">
    <citation type="journal article" date="2004" name="Nat. Genet.">
        <title>Complete sequencing and characterization of 21,243 full-length human cDNAs.</title>
        <authorList>
            <person name="Ota T."/>
            <person name="Suzuki Y."/>
            <person name="Nishikawa T."/>
            <person name="Otsuki T."/>
            <person name="Sugiyama T."/>
            <person name="Irie R."/>
            <person name="Wakamatsu A."/>
            <person name="Hayashi K."/>
            <person name="Sato H."/>
            <person name="Nagai K."/>
            <person name="Kimura K."/>
            <person name="Makita H."/>
            <person name="Sekine M."/>
            <person name="Obayashi M."/>
            <person name="Nishi T."/>
            <person name="Shibahara T."/>
            <person name="Tanaka T."/>
            <person name="Ishii S."/>
            <person name="Yamamoto J."/>
            <person name="Saito K."/>
            <person name="Kawai Y."/>
            <person name="Isono Y."/>
            <person name="Nakamura Y."/>
            <person name="Nagahari K."/>
            <person name="Murakami K."/>
            <person name="Yasuda T."/>
            <person name="Iwayanagi T."/>
            <person name="Wagatsuma M."/>
            <person name="Shiratori A."/>
            <person name="Sudo H."/>
            <person name="Hosoiri T."/>
            <person name="Kaku Y."/>
            <person name="Kodaira H."/>
            <person name="Kondo H."/>
            <person name="Sugawara M."/>
            <person name="Takahashi M."/>
            <person name="Kanda K."/>
            <person name="Yokoi T."/>
            <person name="Furuya T."/>
            <person name="Kikkawa E."/>
            <person name="Omura Y."/>
            <person name="Abe K."/>
            <person name="Kamihara K."/>
            <person name="Katsuta N."/>
            <person name="Sato K."/>
            <person name="Tanikawa M."/>
            <person name="Yamazaki M."/>
            <person name="Ninomiya K."/>
            <person name="Ishibashi T."/>
            <person name="Yamashita H."/>
            <person name="Murakawa K."/>
            <person name="Fujimori K."/>
            <person name="Tanai H."/>
            <person name="Kimata M."/>
            <person name="Watanabe M."/>
            <person name="Hiraoka S."/>
            <person name="Chiba Y."/>
            <person name="Ishida S."/>
            <person name="Ono Y."/>
            <person name="Takiguchi S."/>
            <person name="Watanabe S."/>
            <person name="Yosida M."/>
            <person name="Hotuta T."/>
            <person name="Kusano J."/>
            <person name="Kanehori K."/>
            <person name="Takahashi-Fujii A."/>
            <person name="Hara H."/>
            <person name="Tanase T.-O."/>
            <person name="Nomura Y."/>
            <person name="Togiya S."/>
            <person name="Komai F."/>
            <person name="Hara R."/>
            <person name="Takeuchi K."/>
            <person name="Arita M."/>
            <person name="Imose N."/>
            <person name="Musashino K."/>
            <person name="Yuuki H."/>
            <person name="Oshima A."/>
            <person name="Sasaki N."/>
            <person name="Aotsuka S."/>
            <person name="Yoshikawa Y."/>
            <person name="Matsunawa H."/>
            <person name="Ichihara T."/>
            <person name="Shiohata N."/>
            <person name="Sano S."/>
            <person name="Moriya S."/>
            <person name="Momiyama H."/>
            <person name="Satoh N."/>
            <person name="Takami S."/>
            <person name="Terashima Y."/>
            <person name="Suzuki O."/>
            <person name="Nakagawa S."/>
            <person name="Senoh A."/>
            <person name="Mizoguchi H."/>
            <person name="Goto Y."/>
            <person name="Shimizu F."/>
            <person name="Wakebe H."/>
            <person name="Hishigaki H."/>
            <person name="Watanabe T."/>
            <person name="Sugiyama A."/>
            <person name="Takemoto M."/>
            <person name="Kawakami B."/>
            <person name="Yamazaki M."/>
            <person name="Watanabe K."/>
            <person name="Kumagai A."/>
            <person name="Itakura S."/>
            <person name="Fukuzumi Y."/>
            <person name="Fujimori Y."/>
            <person name="Komiyama M."/>
            <person name="Tashiro H."/>
            <person name="Tanigami A."/>
            <person name="Fujiwara T."/>
            <person name="Ono T."/>
            <person name="Yamada K."/>
            <person name="Fujii Y."/>
            <person name="Ozaki K."/>
            <person name="Hirao M."/>
            <person name="Ohmori Y."/>
            <person name="Kawabata A."/>
            <person name="Hikiji T."/>
            <person name="Kobatake N."/>
            <person name="Inagaki H."/>
            <person name="Ikema Y."/>
            <person name="Okamoto S."/>
            <person name="Okitani R."/>
            <person name="Kawakami T."/>
            <person name="Noguchi S."/>
            <person name="Itoh T."/>
            <person name="Shigeta K."/>
            <person name="Senba T."/>
            <person name="Matsumura K."/>
            <person name="Nakajima Y."/>
            <person name="Mizuno T."/>
            <person name="Morinaga M."/>
            <person name="Sasaki M."/>
            <person name="Togashi T."/>
            <person name="Oyama M."/>
            <person name="Hata H."/>
            <person name="Watanabe M."/>
            <person name="Komatsu T."/>
            <person name="Mizushima-Sugano J."/>
            <person name="Satoh T."/>
            <person name="Shirai Y."/>
            <person name="Takahashi Y."/>
            <person name="Nakagawa K."/>
            <person name="Okumura K."/>
            <person name="Nagase T."/>
            <person name="Nomura N."/>
            <person name="Kikuchi H."/>
            <person name="Masuho Y."/>
            <person name="Yamashita R."/>
            <person name="Nakai K."/>
            <person name="Yada T."/>
            <person name="Nakamura Y."/>
            <person name="Ohara O."/>
            <person name="Isogai T."/>
            <person name="Sugano S."/>
        </authorList>
    </citation>
    <scope>NUCLEOTIDE SEQUENCE [LARGE SCALE MRNA]</scope>
    <source>
        <tissue>Brain</tissue>
    </source>
</reference>
<reference key="10">
    <citation type="submission" date="2005-04" db="EMBL/GenBank/DDBJ databases">
        <authorList>
            <person name="Suzuki Y."/>
            <person name="Sugano S."/>
            <person name="Totoki Y."/>
            <person name="Toyoda A."/>
            <person name="Takeda T."/>
            <person name="Sakaki Y."/>
            <person name="Tanaka A."/>
            <person name="Yokoyama S."/>
        </authorList>
    </citation>
    <scope>NUCLEOTIDE SEQUENCE [LARGE SCALE MRNA]</scope>
    <scope>VARIANT GLN-27</scope>
    <source>
        <tissue>Thyroid</tissue>
    </source>
</reference>
<reference key="11">
    <citation type="submission" date="2005-06" db="EMBL/GenBank/DDBJ databases">
        <authorList>
            <consortium name="SeattleSNPs variation discovery resource"/>
        </authorList>
    </citation>
    <scope>NUCLEOTIDE SEQUENCE [GENOMIC DNA]</scope>
    <scope>VARIANTS GLN-27 AND CYS-220</scope>
</reference>
<reference key="12">
    <citation type="submission" date="2007-12" db="EMBL/GenBank/DDBJ databases">
        <authorList>
            <consortium name="NHLBI resequencing and genotyping service (RS&amp;G)"/>
        </authorList>
    </citation>
    <scope>NUCLEOTIDE SEQUENCE [GENOMIC DNA]</scope>
    <scope>VARIANT GLN-27</scope>
</reference>
<reference key="13">
    <citation type="submission" date="2005-09" db="EMBL/GenBank/DDBJ databases">
        <authorList>
            <person name="Mural R.J."/>
            <person name="Istrail S."/>
            <person name="Sutton G.G."/>
            <person name="Florea L."/>
            <person name="Halpern A.L."/>
            <person name="Mobarry C.M."/>
            <person name="Lippert R."/>
            <person name="Walenz B."/>
            <person name="Shatkay H."/>
            <person name="Dew I."/>
            <person name="Miller J.R."/>
            <person name="Flanigan M.J."/>
            <person name="Edwards N.J."/>
            <person name="Bolanos R."/>
            <person name="Fasulo D."/>
            <person name="Halldorsson B.V."/>
            <person name="Hannenhalli S."/>
            <person name="Turner R."/>
            <person name="Yooseph S."/>
            <person name="Lu F."/>
            <person name="Nusskern D.R."/>
            <person name="Shue B.C."/>
            <person name="Zheng X.H."/>
            <person name="Zhong F."/>
            <person name="Delcher A.L."/>
            <person name="Huson D.H."/>
            <person name="Kravitz S.A."/>
            <person name="Mouchard L."/>
            <person name="Reinert K."/>
            <person name="Remington K.A."/>
            <person name="Clark A.G."/>
            <person name="Waterman M.S."/>
            <person name="Eichler E.E."/>
            <person name="Adams M.D."/>
            <person name="Hunkapiller M.W."/>
            <person name="Myers E.W."/>
            <person name="Venter J.C."/>
        </authorList>
    </citation>
    <scope>NUCLEOTIDE SEQUENCE [LARGE SCALE GENOMIC DNA]</scope>
</reference>
<reference key="14">
    <citation type="journal article" date="2004" name="Genome Res.">
        <title>The status, quality, and expansion of the NIH full-length cDNA project: the Mammalian Gene Collection (MGC).</title>
        <authorList>
            <consortium name="The MGC Project Team"/>
        </authorList>
    </citation>
    <scope>NUCLEOTIDE SEQUENCE [LARGE SCALE MRNA]</scope>
    <scope>VARIANTS ARG-16 AND GLN-27</scope>
    <source>
        <tissue>Fetal brain</tissue>
        <tissue>Leukocyte</tissue>
        <tissue>Prostate</tissue>
    </source>
</reference>
<reference key="15">
    <citation type="journal article" date="1988" name="J. Biol. Chem.">
        <title>Site-directed mutagenesis and continuous expression of human beta-adrenergic receptors. Identification of a conserved aspartate residue involved in agonist binding and receptor activation.</title>
        <authorList>
            <person name="Chung F.-Z."/>
            <person name="Wang C.-D."/>
            <person name="Potter P.C."/>
            <person name="Venter J.C."/>
            <person name="Fraser C.M."/>
        </authorList>
    </citation>
    <scope>MUTAGENESIS OF ASP-79</scope>
    <scope>FUNCTION</scope>
    <scope>SUBCELLULAR LOCATION</scope>
</reference>
<reference key="16">
    <citation type="journal article" date="1989" name="J. Biol. Chem.">
        <title>Palmitoylation of the human beta 2-adrenergic receptor. Mutation of Cys341 in the carboxyl tail leads to an uncoupled nonpalmitoylated form of the receptor.</title>
        <authorList>
            <person name="O'Dowd B.F."/>
            <person name="Hnatowich M."/>
            <person name="Caron M.G."/>
            <person name="Lefkowitz R.J."/>
            <person name="Bouvier M."/>
        </authorList>
    </citation>
    <scope>PALMITOYLATION AT CYS-341</scope>
    <scope>MUTAGENESIS OF CYS-341</scope>
</reference>
<reference key="17">
    <citation type="journal article" date="1995" name="EMBO J.">
        <title>Mutation of tyrosine-141 inhibits insulin-promoted tyrosine phosphorylation and increased responsiveness of the human beta 2-adrenergic receptor.</title>
        <authorList>
            <person name="Valiquette M."/>
            <person name="Parent S."/>
            <person name="Loisel T.P."/>
            <person name="Bouvier M."/>
        </authorList>
    </citation>
    <scope>MUTAGENESIS OF TYR-141; TYR-350; TYR-354 AND TYR-366</scope>
    <scope>PHOSPHORYLATION AT TYR-141</scope>
</reference>
<reference key="18">
    <citation type="journal article" date="1995" name="J. Biol. Chem.">
        <title>Arrestin interactions with G protein-coupled receptors. Direct binding studies of wild type and mutant arrestins with rhodopsin, beta 2-adrenergic, and m2 muscarinic cholinergic receptors.</title>
        <authorList>
            <person name="Gurevich V.V."/>
            <person name="Dion S.B."/>
            <person name="Onorato J.J."/>
            <person name="Ptasienski J."/>
            <person name="Kim C.M."/>
            <person name="Sterne-Marr R."/>
            <person name="Hosey M.M."/>
            <person name="Benovic J.L."/>
        </authorList>
    </citation>
    <scope>INTERACTION WITH ARRB1 AND ARRB2</scope>
</reference>
<reference key="19">
    <citation type="journal article" date="1997" name="J. Biol. Chem.">
        <title>Clathrin-mediated endocytosis of the beta-adrenergic receptor is regulated by phosphorylation/dephosphorylation of beta-arrestin1.</title>
        <authorList>
            <person name="Lin F.-T."/>
            <person name="Krueger K.M."/>
            <person name="Kendall H.E."/>
            <person name="Daaka Y."/>
            <person name="Fredericks Z.L."/>
            <person name="Pitcher J.A."/>
            <person name="Lefkowitz R.J."/>
        </authorList>
    </citation>
    <scope>INTERACTION WITH ARRB1</scope>
</reference>
<reference key="20">
    <citation type="journal article" date="1999" name="Nature">
        <title>A kinase-regulated PDZ-domain interaction controls endocytic sorting of the beta2-adrenergic receptor.</title>
        <authorList>
            <person name="Cao T.T."/>
            <person name="Deacon H.W."/>
            <person name="Reczek D."/>
            <person name="Bretscher A."/>
            <person name="von Zastrow M."/>
        </authorList>
    </citation>
    <scope>INTERACTION WITH NHERF1</scope>
</reference>
<reference key="21">
    <citation type="journal article" date="1999" name="Science">
        <title>Beta-arrestin-dependent formation of beta2 adrenergic receptor-Src protein kinase complexes.</title>
        <authorList>
            <person name="Luttrell L.M."/>
            <person name="Ferguson S.S.G."/>
            <person name="Daaka Y."/>
            <person name="Miller W.E."/>
            <person name="Maudsley S."/>
            <person name="Della Rocca G.J."/>
            <person name="Lin F.-T."/>
            <person name="Kawakatsu H."/>
            <person name="Owada K."/>
            <person name="Luttrell D.K."/>
            <person name="Caron M.G."/>
            <person name="Lefkowitz R.J."/>
        </authorList>
    </citation>
    <scope>INTERACTION WITH SRC AND ARRB1</scope>
</reference>
<reference key="22">
    <citation type="journal article" date="2001" name="J. Neurochem.">
        <title>The palmitoylation state of the beta(2)-adrenergic receptor regulates the synergistic action of cyclic AMP-dependent protein kinase and beta-adrenergic receptor kinase involved in its phosphorylation and desensitization.</title>
        <authorList>
            <person name="Moffett S."/>
            <person name="Rousseau G."/>
            <person name="Lagace M."/>
            <person name="Bouvier M."/>
        </authorList>
    </citation>
    <scope>EFFECT OF PALMITOYLATION</scope>
    <scope>PHOSPHORYLATION AT SER-345 AND SER-346</scope>
    <scope>MUTAGENESIS OF 345-SER-SER-346</scope>
</reference>
<reference key="23">
    <citation type="journal article" date="2002" name="Science">
        <title>Modulation of postendocytic sorting of G protein-coupled receptors.</title>
        <authorList>
            <person name="Whistler J.L."/>
            <person name="Enquist J."/>
            <person name="Marley A."/>
            <person name="Fong J."/>
            <person name="Gladher F."/>
            <person name="Tsuruda P."/>
            <person name="Murray S.R."/>
            <person name="Von Zastrow M."/>
        </authorList>
    </citation>
    <scope>INTERACTION WITH GPRASP1</scope>
</reference>
<reference key="24">
    <citation type="journal article" date="2007" name="Science">
        <title>ATM and ATR substrate analysis reveals extensive protein networks responsive to DNA damage.</title>
        <authorList>
            <person name="Matsuoka S."/>
            <person name="Ballif B.A."/>
            <person name="Smogorzewska A."/>
            <person name="McDonald E.R. III"/>
            <person name="Hurov K.E."/>
            <person name="Luo J."/>
            <person name="Bakalarski C.E."/>
            <person name="Zhao Z."/>
            <person name="Solimini N."/>
            <person name="Lerenthal Y."/>
            <person name="Shiloh Y."/>
            <person name="Gygi S.P."/>
            <person name="Elledge S.J."/>
        </authorList>
    </citation>
    <scope>PHOSPHORYLATION [LARGE SCALE ANALYSIS] AT SER-246</scope>
    <scope>IDENTIFICATION BY MASS SPECTROMETRY [LARGE SCALE ANALYSIS]</scope>
    <source>
        <tissue>Embryonic kidney</tissue>
    </source>
</reference>
<reference key="25">
    <citation type="journal article" date="2009" name="EMBO J.">
        <title>The deubiquitinases USP33 and USP20 coordinate beta2 adrenergic receptor recycling and resensitization.</title>
        <authorList>
            <person name="Berthouze M."/>
            <person name="Venkataramanan V."/>
            <person name="Li Y."/>
            <person name="Shenoy S.K."/>
        </authorList>
    </citation>
    <scope>UBIQUITINATION</scope>
    <scope>DEUBIQUITINATION BY USP20 AND USP33</scope>
    <scope>INTERACTION WITH USP20 AND USP33</scope>
</reference>
<reference key="26">
    <citation type="journal article" date="2009" name="Sci. Signal.">
        <title>Oxygen-regulated beta(2)-adrenergic receptor hydroxylation by EGLN3 and ubiquitylation by pVHL.</title>
        <authorList>
            <person name="Xie L."/>
            <person name="Xiao K."/>
            <person name="Whalen E.J."/>
            <person name="Forrester M.T."/>
            <person name="Freeman R.S."/>
            <person name="Fong G."/>
            <person name="Gygi S.P."/>
            <person name="Lefkowitz R.J."/>
            <person name="Stamler J.S."/>
        </authorList>
    </citation>
    <scope>INTERACTION WITH EGLN3 AND VHL</scope>
    <scope>SUBCELLULAR LOCATION</scope>
    <scope>INDUCTION</scope>
    <scope>UBIQUITINATION</scope>
    <scope>HYDROXYLATION AT PRO-382 AND PRO-395</scope>
    <scope>IDENTIFICATION BY MASS SPECTROMETRY</scope>
</reference>
<reference key="27">
    <citation type="journal article" date="2010" name="EMBO Rep.">
        <title>Arrestin domain-containing protein 3 recruits the NEDD4 E3 ligase to mediate ubiquitination of the beta2-adrenergic receptor.</title>
        <authorList>
            <person name="Nabhan J.F."/>
            <person name="Pan H."/>
            <person name="Lu Q."/>
        </authorList>
    </citation>
    <scope>UBIQUITINATION</scope>
    <scope>SUBCELLULAR LOCATION</scope>
    <scope>INTERACTION WITH ARRDC3</scope>
</reference>
<reference key="28">
    <citation type="journal article" date="2010" name="J. Cell Biol.">
        <title>SNX27 mediates PDZ-directed sorting from endosomes to the plasma membrane.</title>
        <authorList>
            <person name="Lauffer B.E."/>
            <person name="Melero C."/>
            <person name="Temkin P."/>
            <person name="Lei C."/>
            <person name="Hong W."/>
            <person name="Kortemme T."/>
            <person name="von Zastrow M."/>
        </authorList>
    </citation>
    <scope>INTERACTION WITH SNX27</scope>
</reference>
<reference key="29">
    <citation type="journal article" date="2011" name="Nat. Cell Biol.">
        <title>SNX27 mediates retromer tubule entry and endosome-to-plasma membrane trafficking of signalling receptors.</title>
        <authorList>
            <person name="Temkin P."/>
            <person name="Lauffer B."/>
            <person name="Jager S."/>
            <person name="Cimermancic P."/>
            <person name="Krogan N.J."/>
            <person name="von Zastrow M."/>
        </authorList>
    </citation>
    <scope>INTERACTION WITH SNX27</scope>
</reference>
<reference key="30">
    <citation type="journal article" date="2012" name="J. Cell Biol.">
        <title>MARCH2 promotes endocytosis and lysosomal sorting of carvedilol-bound beta(2)-adrenergic receptors.</title>
        <authorList>
            <person name="Han S.O."/>
            <person name="Xiao K."/>
            <person name="Kim J."/>
            <person name="Wu J.H."/>
            <person name="Wisler J.W."/>
            <person name="Nakamura N."/>
            <person name="Freedman N.J."/>
            <person name="Shenoy S.K."/>
        </authorList>
    </citation>
    <scope>INTERACTION WITH MARCHF2; NEDD4; USP20 AND USP33</scope>
    <scope>SUBCELLULAR LOCATION</scope>
    <scope>UBIQUITINATION</scope>
</reference>
<reference key="31">
    <citation type="journal article" date="2014" name="Protein Sci.">
        <title>Insights into beta2-adrenergic receptor binding from structures of the N-terminal lobe of ARRDC3.</title>
        <authorList>
            <person name="Qi S."/>
            <person name="O'Hayre M."/>
            <person name="Gutkind J.S."/>
            <person name="Hurley J.H."/>
        </authorList>
    </citation>
    <scope>SUBCELLULAR LOCATION</scope>
    <scope>INTERACTION WITH ARRDC3</scope>
</reference>
<reference key="32">
    <citation type="journal article" date="2014" name="Traffic">
        <title>CNIH4 interacts with newly synthesized GPCR and controls their export from the endoplasmic reticulum.</title>
        <authorList>
            <person name="Sauvageau E."/>
            <person name="Rochdi M.D."/>
            <person name="Oueslati M."/>
            <person name="Hamdan F.F."/>
            <person name="Percherancier Y."/>
            <person name="Simpson J.C."/>
            <person name="Pepperkok R."/>
            <person name="Bouvier M."/>
        </authorList>
    </citation>
    <scope>INTERACTION WITH CNIH4</scope>
</reference>
<reference key="33">
    <citation type="journal article" date="2016" name="J. Biol. Chem.">
        <title>S-Palmitoylation of a Novel Site in the beta2-Adrenergic Receptor Associated with a Novel Intracellular Itinerary.</title>
        <authorList>
            <person name="Adachi N."/>
            <person name="Hess D.T."/>
            <person name="McLaughlin P."/>
            <person name="Stamler J.S."/>
        </authorList>
    </citation>
    <scope>SUBCELLULAR LOCATION</scope>
    <scope>PALMITOYLATION AT CYS-265 AND CYS-341</scope>
    <scope>MUTAGENESIS OF CYS-265 AND CYS-341</scope>
</reference>
<reference evidence="40 41" key="34">
    <citation type="journal article" date="2007" name="Nature">
        <title>Crystal structure of the human beta2 adrenergic G-protein-coupled receptor.</title>
        <authorList>
            <person name="Rasmussen S.G.F."/>
            <person name="Choi H.-J."/>
            <person name="Rosenbaum D.M."/>
            <person name="Kobilka T.S."/>
            <person name="Thian F.S."/>
            <person name="Edwards P.C."/>
            <person name="Burghammer M."/>
            <person name="Ratnala V.R.P."/>
            <person name="Sanishvili R."/>
            <person name="Fischetti R.F."/>
            <person name="Schertler G.F.X."/>
            <person name="Weis W.I."/>
            <person name="Kobilka B.K."/>
        </authorList>
    </citation>
    <scope>X-RAY CRYSTALLOGRAPHY (3.4 ANGSTROMS) OF 1-365 IN COMPLEX WITH CARAZOLOL</scope>
    <scope>TOPOLOGY</scope>
</reference>
<reference evidence="42" key="35">
    <citation type="journal article" date="2007" name="Science">
        <title>High-resolution crystal structure of an engineered human beta2-adrenergic G protein-coupled receptor.</title>
        <authorList>
            <person name="Cherezov V."/>
            <person name="Rosenbaum D.M."/>
            <person name="Hanson M.A."/>
            <person name="Rasmussen S.G.F."/>
            <person name="Thian F.S."/>
            <person name="Kobilka T.S."/>
            <person name="Choi H.-J."/>
            <person name="Kuhn P."/>
            <person name="Weis W.I."/>
            <person name="Kobilka B.K."/>
            <person name="Stevens R.C."/>
        </authorList>
    </citation>
    <scope>X-RAY CRYSTALLOGRAPHY (2.4 ANGSTROMS) OF 1-365 IN COMPLEX WITH CARAZOLOL AND CHOLESTEROL</scope>
    <scope>DISULFIDE BONDS</scope>
    <scope>TOPOLOGY</scope>
    <scope>PALMITOYLATION AT CYS-341</scope>
</reference>
<reference evidence="43" key="36">
    <citation type="journal article" date="2008" name="Structure">
        <title>A specific cholesterol binding site is established by the 2.8 A structure of the human beta2-adrenergic receptor.</title>
        <authorList>
            <person name="Hanson M.A."/>
            <person name="Cherezov V."/>
            <person name="Griffith M.T."/>
            <person name="Roth C.B."/>
            <person name="Jaakola V.P."/>
            <person name="Chien E.Y."/>
            <person name="Velasquez J."/>
            <person name="Kuhn P."/>
            <person name="Stevens R.C."/>
        </authorList>
    </citation>
    <scope>X-RAY CRYSTALLOGRAPHY (2.8 ANGSTROMS) OF 1-365 IN COMPLEX WITH TIMOLOL AND CHOLESTEROL</scope>
    <scope>DISULFIDE BONDS</scope>
    <scope>TOPOLOGY</scope>
    <scope>PALMITOYLATION AT CYS-341</scope>
</reference>
<reference key="37">
    <citation type="journal article" date="1994" name="Biochemistry">
        <title>Amino-terminal polymorphisms of the human beta 2-adrenergic receptor impart distinct agonist-promoted regulatory properties.</title>
        <authorList>
            <person name="Green S.A."/>
            <person name="Turki J."/>
            <person name="Innis M."/>
            <person name="Ligget S.B."/>
        </authorList>
    </citation>
    <scope>VARIANTS ARG-16 AND GLN-27</scope>
    <scope>CHARACTERIZATION</scope>
    <scope>FUNCTION</scope>
    <scope>SUBCELLULAR LOCATION</scope>
</reference>
<reference key="38">
    <citation type="journal article" date="1995" name="J. Clin. Invest.">
        <title>Genetic polymorphisms of the beta 2-adrenergic receptor in nocturnal and nonnocturnal asthma. Evidence that Gly16 correlates with the nocturnal phenotype.</title>
        <authorList>
            <person name="Turki J."/>
            <person name="Pak J."/>
            <person name="Green S.A."/>
            <person name="Martin R.J."/>
            <person name="Liggett S.B."/>
        </authorList>
    </citation>
    <scope>VARIANT ARG-16</scope>
    <scope>POLYMORPHISM</scope>
</reference>
<accession>P07550</accession>
<accession>B0LPE4</accession>
<accession>B2R7X2</accession>
<accession>O14823</accession>
<accession>O14824</accession>
<accession>O14825</accession>
<accession>O14826</accession>
<accession>Q4JG18</accession>
<accession>Q53GA6</accession>
<accession>Q6GMT4</accession>
<accession>Q6P4D8</accession>
<accession>Q8NEQ9</accession>
<accession>Q96EC3</accession>
<accession>Q9UCZ0</accession>
<accession>Q9UCZ1</accession>
<accession>Q9UCZ2</accession>
<accession>Q9UCZ3</accession>
<accession>Q9UH95</accession>
<accession>Q9UHA1</accession>
<accession>Q9UMZ5</accession>
<feature type="chain" id="PRO_0000069130" description="Beta-2 adrenergic receptor">
    <location>
        <begin position="1"/>
        <end position="413"/>
    </location>
</feature>
<feature type="topological domain" description="Extracellular">
    <location>
        <begin position="1"/>
        <end position="34"/>
    </location>
</feature>
<feature type="transmembrane region" description="Helical; Name=1">
    <location>
        <begin position="35"/>
        <end position="58"/>
    </location>
</feature>
<feature type="topological domain" description="Cytoplasmic">
    <location>
        <begin position="59"/>
        <end position="71"/>
    </location>
</feature>
<feature type="transmembrane region" description="Helical; Name=2">
    <location>
        <begin position="72"/>
        <end position="95"/>
    </location>
</feature>
<feature type="topological domain" description="Extracellular">
    <location>
        <begin position="96"/>
        <end position="106"/>
    </location>
</feature>
<feature type="transmembrane region" description="Helical; Name=3">
    <location>
        <begin position="107"/>
        <end position="129"/>
    </location>
</feature>
<feature type="topological domain" description="Cytoplasmic">
    <location>
        <begin position="130"/>
        <end position="150"/>
    </location>
</feature>
<feature type="transmembrane region" description="Helical; Name=4">
    <location>
        <begin position="151"/>
        <end position="174"/>
    </location>
</feature>
<feature type="topological domain" description="Extracellular">
    <location>
        <begin position="175"/>
        <end position="196"/>
    </location>
</feature>
<feature type="transmembrane region" description="Helical; Name=5">
    <location>
        <begin position="197"/>
        <end position="220"/>
    </location>
</feature>
<feature type="topological domain" description="Cytoplasmic">
    <location>
        <begin position="221"/>
        <end position="274"/>
    </location>
</feature>
<feature type="transmembrane region" description="Helical; Name=6">
    <location>
        <begin position="275"/>
        <end position="298"/>
    </location>
</feature>
<feature type="topological domain" description="Extracellular">
    <location>
        <begin position="299"/>
        <end position="305"/>
    </location>
</feature>
<feature type="transmembrane region" description="Helical; Name=7">
    <location>
        <begin position="306"/>
        <end position="329"/>
    </location>
</feature>
<feature type="topological domain" description="Cytoplasmic">
    <location>
        <begin position="330"/>
        <end position="413"/>
    </location>
</feature>
<feature type="region of interest" description="Disordered" evidence="3">
    <location>
        <begin position="392"/>
        <end position="413"/>
    </location>
</feature>
<feature type="short sequence motif" description="PDZ-binding">
    <location>
        <begin position="410"/>
        <end position="413"/>
    </location>
</feature>
<feature type="compositionally biased region" description="Polar residues" evidence="3">
    <location>
        <begin position="393"/>
        <end position="413"/>
    </location>
</feature>
<feature type="binding site" evidence="9 10 42">
    <location>
        <position position="113"/>
    </location>
    <ligand>
        <name>(S)-carazolol</name>
        <dbReference type="ChEBI" id="CHEBI:188146"/>
        <note>inverse agonist</note>
    </ligand>
</feature>
<feature type="binding site" evidence="11 43">
    <location>
        <position position="113"/>
    </location>
    <ligand>
        <name>(S)-timolol</name>
        <dbReference type="ChEBI" id="CHEBI:188157"/>
        <note>inverse agonist</note>
    </ligand>
</feature>
<feature type="binding site" evidence="11 43">
    <location>
        <position position="118"/>
    </location>
    <ligand>
        <name>(S)-timolol</name>
        <dbReference type="ChEBI" id="CHEBI:188157"/>
        <note>inverse agonist</note>
    </ligand>
</feature>
<feature type="binding site" evidence="9 10 42">
    <location>
        <position position="203"/>
    </location>
    <ligand>
        <name>(S)-carazolol</name>
        <dbReference type="ChEBI" id="CHEBI:188146"/>
        <note>inverse agonist</note>
    </ligand>
</feature>
<feature type="binding site" evidence="11 43">
    <location>
        <position position="293"/>
    </location>
    <ligand>
        <name>(S)-timolol</name>
        <dbReference type="ChEBI" id="CHEBI:188157"/>
        <note>inverse agonist</note>
    </ligand>
</feature>
<feature type="binding site" evidence="9 10 42">
    <location>
        <position position="312"/>
    </location>
    <ligand>
        <name>(S)-carazolol</name>
        <dbReference type="ChEBI" id="CHEBI:188146"/>
        <note>inverse agonist</note>
    </ligand>
</feature>
<feature type="binding site" evidence="11 43">
    <location>
        <position position="312"/>
    </location>
    <ligand>
        <name>(S)-timolol</name>
        <dbReference type="ChEBI" id="CHEBI:188157"/>
        <note>inverse agonist</note>
    </ligand>
</feature>
<feature type="binding site" evidence="11 43">
    <location>
        <position position="316"/>
    </location>
    <ligand>
        <name>(S)-timolol</name>
        <dbReference type="ChEBI" id="CHEBI:188157"/>
        <note>inverse agonist</note>
    </ligand>
</feature>
<feature type="modified residue" description="Phosphotyrosine" evidence="32">
    <location>
        <position position="141"/>
    </location>
</feature>
<feature type="modified residue" description="Phosphoserine" evidence="44">
    <location>
        <position position="246"/>
    </location>
</feature>
<feature type="modified residue" description="Phosphoserine; by PKA" evidence="1">
    <location>
        <position position="261"/>
    </location>
</feature>
<feature type="modified residue" description="Phosphoserine; by PKA" evidence="1">
    <location>
        <position position="262"/>
    </location>
</feature>
<feature type="modified residue" description="Phosphoserine; by PKA" evidence="5">
    <location>
        <position position="345"/>
    </location>
</feature>
<feature type="modified residue" description="Phosphoserine; by PKA" evidence="5">
    <location>
        <position position="346"/>
    </location>
</feature>
<feature type="modified residue" description="Phosphoserine; by BARK" evidence="39">
    <location>
        <position position="355"/>
    </location>
</feature>
<feature type="modified residue" description="Phosphoserine; by BARK" evidence="39">
    <location>
        <position position="356"/>
    </location>
</feature>
<feature type="modified residue" description="4-hydroxyproline" evidence="13">
    <location>
        <position position="382"/>
    </location>
</feature>
<feature type="modified residue" description="4-hydroxyproline" evidence="13">
    <location>
        <position position="395"/>
    </location>
</feature>
<feature type="lipid moiety-binding region" description="S-palmitoyl cysteine" evidence="21">
    <location>
        <position position="265"/>
    </location>
</feature>
<feature type="lipid moiety-binding region" description="S-palmitoyl cysteine" evidence="10 11 20 21">
    <location>
        <position position="341"/>
    </location>
</feature>
<feature type="glycosylation site" description="N-linked (GlcNAc...) asparagine" evidence="39">
    <location>
        <position position="6"/>
    </location>
</feature>
<feature type="glycosylation site" description="N-linked (GlcNAc...) asparagine" evidence="39">
    <location>
        <position position="15"/>
    </location>
</feature>
<feature type="disulfide bond">
    <location>
        <begin position="106"/>
        <end position="191"/>
    </location>
</feature>
<feature type="disulfide bond">
    <location>
        <begin position="184"/>
        <end position="190"/>
    </location>
</feature>
<feature type="sequence variant" id="VAR_049373" description="In dbSNP:rs33973603.">
    <original>N</original>
    <variation>S</variation>
    <location>
        <position position="15"/>
    </location>
</feature>
<feature type="sequence variant" id="VAR_003452" description="In dbSNP:rs1042713." evidence="8 24 26 27 28 30 31 38">
    <original>G</original>
    <variation>R</variation>
    <location>
        <position position="16"/>
    </location>
</feature>
<feature type="sequence variant" id="VAR_003453" description="In dbSNP:rs1042714." evidence="6 8 22 24 25 26 27 30 31 35 36 37 38">
    <original>E</original>
    <variation>Q</variation>
    <location>
        <position position="27"/>
    </location>
</feature>
<feature type="sequence variant" id="VAR_003454" description="In dbSNP:rs990810566." evidence="31">
    <original>V</original>
    <variation>M</variation>
    <location>
        <position position="34"/>
    </location>
</feature>
<feature type="sequence variant" id="VAR_009125" evidence="6">
    <original>I</original>
    <variation>F</variation>
    <location>
        <position position="159"/>
    </location>
</feature>
<feature type="sequence variant" id="VAR_009124" evidence="6">
    <original>I</original>
    <variation>L</variation>
    <location>
        <position position="159"/>
    </location>
</feature>
<feature type="sequence variant" id="VAR_003455" description="In dbSNP:rs1800888." evidence="31">
    <original>T</original>
    <variation>I</variation>
    <location>
        <position position="164"/>
    </location>
</feature>
<feature type="sequence variant" id="VAR_025101" description="In dbSNP:rs3729943." evidence="36">
    <original>S</original>
    <variation>C</variation>
    <location>
        <position position="220"/>
    </location>
</feature>
<feature type="sequence variant" id="VAR_009394" description="In dbSNP:rs771585355." evidence="6">
    <original>K</original>
    <variation>R</variation>
    <location>
        <position position="375"/>
    </location>
</feature>
<feature type="mutagenesis site" description="Affects binding of catecholamines, and produces an uncoupling between the receptor and stimulatory G proteins." evidence="23">
    <original>D</original>
    <variation>N</variation>
    <location>
        <position position="79"/>
    </location>
</feature>
<feature type="mutagenesis site" description="Abolishes insulin-induced tyrosine phosphorylation and insulin-induced receptor supersensitization." evidence="32">
    <original>Y</original>
    <variation>F</variation>
    <location>
        <position position="141"/>
    </location>
</feature>
<feature type="mutagenesis site" description="Loss of ligand-induced palmitoylation." evidence="21">
    <original>C</original>
    <variation>A</variation>
    <location>
        <position position="265"/>
    </location>
</feature>
<feature type="mutagenesis site" description="Loss of basal palmitoylation." evidence="21">
    <original>C</original>
    <variation>A</variation>
    <location>
        <position position="341"/>
    </location>
</feature>
<feature type="mutagenesis site" description="Uncoupled receptor." evidence="20">
    <original>C</original>
    <variation>G</variation>
    <location>
        <position position="341"/>
    </location>
</feature>
<feature type="mutagenesis site" description="Delayed agonist-promoted desensitization." evidence="5">
    <original>SS</original>
    <variation>AA</variation>
    <location>
        <begin position="345"/>
        <end position="346"/>
    </location>
</feature>
<feature type="mutagenesis site" description="Does not affect insulin-induced tyrosine phosphorylation or insulin-induced receptor supersensitization." evidence="32">
    <original>Y</original>
    <variation>A</variation>
    <location>
        <position position="350"/>
    </location>
</feature>
<feature type="mutagenesis site" description="Does not affect insulin-induced tyrosine phosphorylation or insulin-induced receptor supersensitization." evidence="32">
    <original>Y</original>
    <variation>A</variation>
    <location>
        <position position="354"/>
    </location>
</feature>
<feature type="mutagenesis site" description="Does not affect insulin-induced tyrosine phosphorylation or insulin-induced receptor supersensitization." evidence="32">
    <original>Y</original>
    <variation>F</variation>
    <location>
        <position position="366"/>
    </location>
</feature>
<feature type="sequence conflict" description="In Ref. 9; BAG35969." evidence="39" ref="9">
    <original>F</original>
    <variation>L</variation>
    <location>
        <position position="71"/>
    </location>
</feature>
<feature type="sequence conflict" description="In Ref. 8; AAN01267." evidence="39" ref="8">
    <original>V</original>
    <variation>A</variation>
    <location>
        <position position="216"/>
    </location>
</feature>
<feature type="sequence conflict" description="In Ref. 10; BAD96745." evidence="39" ref="10">
    <original>S</original>
    <variation>P</variation>
    <location>
        <position position="261"/>
    </location>
</feature>
<feature type="sequence conflict" description="In Ref. 14; AAH12481." evidence="39" ref="14">
    <original>Q</original>
    <variation>P</variation>
    <location>
        <position position="402"/>
    </location>
</feature>
<feature type="strand" evidence="47">
    <location>
        <begin position="25"/>
        <end position="27"/>
    </location>
</feature>
<feature type="helix" evidence="46">
    <location>
        <begin position="31"/>
        <end position="60"/>
    </location>
</feature>
<feature type="helix" evidence="46">
    <location>
        <begin position="62"/>
        <end position="64"/>
    </location>
</feature>
<feature type="helix" evidence="46">
    <location>
        <begin position="67"/>
        <end position="85"/>
    </location>
</feature>
<feature type="helix" evidence="46">
    <location>
        <begin position="87"/>
        <end position="96"/>
    </location>
</feature>
<feature type="helix" evidence="46">
    <location>
        <begin position="102"/>
        <end position="136"/>
    </location>
</feature>
<feature type="strand" evidence="46">
    <location>
        <begin position="137"/>
        <end position="139"/>
    </location>
</feature>
<feature type="strand" evidence="49">
    <location>
        <begin position="140"/>
        <end position="142"/>
    </location>
</feature>
<feature type="helix" evidence="46">
    <location>
        <begin position="147"/>
        <end position="170"/>
    </location>
</feature>
<feature type="turn" evidence="46">
    <location>
        <begin position="171"/>
        <end position="174"/>
    </location>
</feature>
<feature type="helix" evidence="46">
    <location>
        <begin position="179"/>
        <end position="186"/>
    </location>
</feature>
<feature type="strand" evidence="51">
    <location>
        <begin position="187"/>
        <end position="189"/>
    </location>
</feature>
<feature type="helix" evidence="46">
    <location>
        <begin position="197"/>
        <end position="207"/>
    </location>
</feature>
<feature type="helix" evidence="46">
    <location>
        <begin position="209"/>
        <end position="229"/>
    </location>
</feature>
<feature type="turn" evidence="52">
    <location>
        <begin position="238"/>
        <end position="240"/>
    </location>
</feature>
<feature type="helix" evidence="46">
    <location>
        <begin position="267"/>
        <end position="298"/>
    </location>
</feature>
<feature type="strand" evidence="50">
    <location>
        <begin position="299"/>
        <end position="303"/>
    </location>
</feature>
<feature type="helix" evidence="46">
    <location>
        <begin position="305"/>
        <end position="317"/>
    </location>
</feature>
<feature type="helix" evidence="46">
    <location>
        <begin position="318"/>
        <end position="320"/>
    </location>
</feature>
<feature type="helix" evidence="46">
    <location>
        <begin position="322"/>
        <end position="325"/>
    </location>
</feature>
<feature type="helix" evidence="46">
    <location>
        <begin position="326"/>
        <end position="328"/>
    </location>
</feature>
<feature type="helix" evidence="46">
    <location>
        <begin position="330"/>
        <end position="339"/>
    </location>
</feature>
<feature type="turn" evidence="48">
    <location>
        <begin position="340"/>
        <end position="342"/>
    </location>
</feature>
<feature type="turn" evidence="45">
    <location>
        <begin position="345"/>
        <end position="347"/>
    </location>
</feature>
<proteinExistence type="evidence at protein level"/>
<keyword id="KW-0002">3D-structure</keyword>
<keyword id="KW-1003">Cell membrane</keyword>
<keyword id="KW-1015">Disulfide bond</keyword>
<keyword id="KW-0967">Endosome</keyword>
<keyword id="KW-0297">G-protein coupled receptor</keyword>
<keyword id="KW-0325">Glycoprotein</keyword>
<keyword id="KW-0333">Golgi apparatus</keyword>
<keyword id="KW-0379">Hydroxylation</keyword>
<keyword id="KW-0449">Lipoprotein</keyword>
<keyword id="KW-0472">Membrane</keyword>
<keyword id="KW-0564">Palmitate</keyword>
<keyword id="KW-0597">Phosphoprotein</keyword>
<keyword id="KW-1267">Proteomics identification</keyword>
<keyword id="KW-0675">Receptor</keyword>
<keyword id="KW-1185">Reference proteome</keyword>
<keyword id="KW-0807">Transducer</keyword>
<keyword id="KW-0812">Transmembrane</keyword>
<keyword id="KW-1133">Transmembrane helix</keyword>
<keyword id="KW-0832">Ubl conjugation</keyword>
<name>ADRB2_HUMAN</name>